<reference key="1">
    <citation type="journal article" date="1996" name="Nat. Genet.">
        <title>X-linked anhidrotic (hypohidrotic) ectodermal dysplasia is caused by mutation in a novel transmembrane protein.</title>
        <authorList>
            <person name="Kere J."/>
            <person name="Srivastava A.K."/>
            <person name="Montonen O."/>
            <person name="Zonana J."/>
            <person name="Thomas N.S.T."/>
            <person name="Ferguson B.M."/>
            <person name="Munoz F."/>
            <person name="Morgan D."/>
            <person name="Clarke A."/>
            <person name="Baybayan P."/>
            <person name="Chen E.Y."/>
            <person name="Ezer S."/>
            <person name="Saarialho-Kere U."/>
            <person name="la Chapelle A."/>
            <person name="Schlessinger D."/>
        </authorList>
    </citation>
    <scope>NUCLEOTIDE SEQUENCE [MRNA] (ISOFORM 2)</scope>
    <scope>NUCLEOTIDE SEQUENCE [GENOMIC DNA] OF 1-132</scope>
    <scope>VARIANTS XHED HIS-61 AND LEU-69</scope>
    <scope>FUNCTION</scope>
    <source>
        <tissue>Sweat gland</tissue>
    </source>
</reference>
<reference key="2">
    <citation type="journal article" date="1998" name="Am. J. Hum. Genet.">
        <title>Identification of a new splice form of the EDA1 gene permits detection of nearly all X-linked hypohidrotic ectodermal dysplasia mutations.</title>
        <authorList>
            <person name="Monreal A.W."/>
            <person name="Zonana J."/>
            <person name="Ferguson B.M."/>
        </authorList>
    </citation>
    <scope>NUCLEOTIDE SEQUENCE [MRNA] (ISOFORM 1)</scope>
    <scope>NUCLEOTIDE SEQUENCE [GENOMIC DNA] OF 133-391</scope>
    <scope>VARIANTS XHED</scope>
    <source>
        <tissue>Fetal liver</tissue>
    </source>
</reference>
<reference key="3">
    <citation type="journal article" date="1998" name="Hum. Mol. Genet.">
        <title>The anhidrotic ectodermal dysplasia gene (EDA) undergoes alternative splicing and encodes ectodysplasin-A with deletion mutations in collagenous repeats.</title>
        <authorList>
            <person name="Bayes M."/>
            <person name="Hartung A.J."/>
            <person name="Ezer S."/>
            <person name="Pispa J."/>
            <person name="Thesleff I."/>
            <person name="Srivastava A.K."/>
            <person name="Kere J."/>
        </authorList>
    </citation>
    <scope>NUCLEOTIDE SEQUENCE [MRNA] (ISOFORMS 1; 3; 4; 5; 6 AND 7)</scope>
    <scope>VARIANTS XHED</scope>
</reference>
<reference key="4">
    <citation type="journal article" date="2005" name="Nature">
        <title>The DNA sequence of the human X chromosome.</title>
        <authorList>
            <person name="Ross M.T."/>
            <person name="Grafham D.V."/>
            <person name="Coffey A.J."/>
            <person name="Scherer S."/>
            <person name="McLay K."/>
            <person name="Muzny D."/>
            <person name="Platzer M."/>
            <person name="Howell G.R."/>
            <person name="Burrows C."/>
            <person name="Bird C.P."/>
            <person name="Frankish A."/>
            <person name="Lovell F.L."/>
            <person name="Howe K.L."/>
            <person name="Ashurst J.L."/>
            <person name="Fulton R.S."/>
            <person name="Sudbrak R."/>
            <person name="Wen G."/>
            <person name="Jones M.C."/>
            <person name="Hurles M.E."/>
            <person name="Andrews T.D."/>
            <person name="Scott C.E."/>
            <person name="Searle S."/>
            <person name="Ramser J."/>
            <person name="Whittaker A."/>
            <person name="Deadman R."/>
            <person name="Carter N.P."/>
            <person name="Hunt S.E."/>
            <person name="Chen R."/>
            <person name="Cree A."/>
            <person name="Gunaratne P."/>
            <person name="Havlak P."/>
            <person name="Hodgson A."/>
            <person name="Metzker M.L."/>
            <person name="Richards S."/>
            <person name="Scott G."/>
            <person name="Steffen D."/>
            <person name="Sodergren E."/>
            <person name="Wheeler D.A."/>
            <person name="Worley K.C."/>
            <person name="Ainscough R."/>
            <person name="Ambrose K.D."/>
            <person name="Ansari-Lari M.A."/>
            <person name="Aradhya S."/>
            <person name="Ashwell R.I."/>
            <person name="Babbage A.K."/>
            <person name="Bagguley C.L."/>
            <person name="Ballabio A."/>
            <person name="Banerjee R."/>
            <person name="Barker G.E."/>
            <person name="Barlow K.F."/>
            <person name="Barrett I.P."/>
            <person name="Bates K.N."/>
            <person name="Beare D.M."/>
            <person name="Beasley H."/>
            <person name="Beasley O."/>
            <person name="Beck A."/>
            <person name="Bethel G."/>
            <person name="Blechschmidt K."/>
            <person name="Brady N."/>
            <person name="Bray-Allen S."/>
            <person name="Bridgeman A.M."/>
            <person name="Brown A.J."/>
            <person name="Brown M.J."/>
            <person name="Bonnin D."/>
            <person name="Bruford E.A."/>
            <person name="Buhay C."/>
            <person name="Burch P."/>
            <person name="Burford D."/>
            <person name="Burgess J."/>
            <person name="Burrill W."/>
            <person name="Burton J."/>
            <person name="Bye J.M."/>
            <person name="Carder C."/>
            <person name="Carrel L."/>
            <person name="Chako J."/>
            <person name="Chapman J.C."/>
            <person name="Chavez D."/>
            <person name="Chen E."/>
            <person name="Chen G."/>
            <person name="Chen Y."/>
            <person name="Chen Z."/>
            <person name="Chinault C."/>
            <person name="Ciccodicola A."/>
            <person name="Clark S.Y."/>
            <person name="Clarke G."/>
            <person name="Clee C.M."/>
            <person name="Clegg S."/>
            <person name="Clerc-Blankenburg K."/>
            <person name="Clifford K."/>
            <person name="Cobley V."/>
            <person name="Cole C.G."/>
            <person name="Conquer J.S."/>
            <person name="Corby N."/>
            <person name="Connor R.E."/>
            <person name="David R."/>
            <person name="Davies J."/>
            <person name="Davis C."/>
            <person name="Davis J."/>
            <person name="Delgado O."/>
            <person name="Deshazo D."/>
            <person name="Dhami P."/>
            <person name="Ding Y."/>
            <person name="Dinh H."/>
            <person name="Dodsworth S."/>
            <person name="Draper H."/>
            <person name="Dugan-Rocha S."/>
            <person name="Dunham A."/>
            <person name="Dunn M."/>
            <person name="Durbin K.J."/>
            <person name="Dutta I."/>
            <person name="Eades T."/>
            <person name="Ellwood M."/>
            <person name="Emery-Cohen A."/>
            <person name="Errington H."/>
            <person name="Evans K.L."/>
            <person name="Faulkner L."/>
            <person name="Francis F."/>
            <person name="Frankland J."/>
            <person name="Fraser A.E."/>
            <person name="Galgoczy P."/>
            <person name="Gilbert J."/>
            <person name="Gill R."/>
            <person name="Gloeckner G."/>
            <person name="Gregory S.G."/>
            <person name="Gribble S."/>
            <person name="Griffiths C."/>
            <person name="Grocock R."/>
            <person name="Gu Y."/>
            <person name="Gwilliam R."/>
            <person name="Hamilton C."/>
            <person name="Hart E.A."/>
            <person name="Hawes A."/>
            <person name="Heath P.D."/>
            <person name="Heitmann K."/>
            <person name="Hennig S."/>
            <person name="Hernandez J."/>
            <person name="Hinzmann B."/>
            <person name="Ho S."/>
            <person name="Hoffs M."/>
            <person name="Howden P.J."/>
            <person name="Huckle E.J."/>
            <person name="Hume J."/>
            <person name="Hunt P.J."/>
            <person name="Hunt A.R."/>
            <person name="Isherwood J."/>
            <person name="Jacob L."/>
            <person name="Johnson D."/>
            <person name="Jones S."/>
            <person name="de Jong P.J."/>
            <person name="Joseph S.S."/>
            <person name="Keenan S."/>
            <person name="Kelly S."/>
            <person name="Kershaw J.K."/>
            <person name="Khan Z."/>
            <person name="Kioschis P."/>
            <person name="Klages S."/>
            <person name="Knights A.J."/>
            <person name="Kosiura A."/>
            <person name="Kovar-Smith C."/>
            <person name="Laird G.K."/>
            <person name="Langford C."/>
            <person name="Lawlor S."/>
            <person name="Leversha M."/>
            <person name="Lewis L."/>
            <person name="Liu W."/>
            <person name="Lloyd C."/>
            <person name="Lloyd D.M."/>
            <person name="Loulseged H."/>
            <person name="Loveland J.E."/>
            <person name="Lovell J.D."/>
            <person name="Lozado R."/>
            <person name="Lu J."/>
            <person name="Lyne R."/>
            <person name="Ma J."/>
            <person name="Maheshwari M."/>
            <person name="Matthews L.H."/>
            <person name="McDowall J."/>
            <person name="McLaren S."/>
            <person name="McMurray A."/>
            <person name="Meidl P."/>
            <person name="Meitinger T."/>
            <person name="Milne S."/>
            <person name="Miner G."/>
            <person name="Mistry S.L."/>
            <person name="Morgan M."/>
            <person name="Morris S."/>
            <person name="Mueller I."/>
            <person name="Mullikin J.C."/>
            <person name="Nguyen N."/>
            <person name="Nordsiek G."/>
            <person name="Nyakatura G."/>
            <person name="O'dell C.N."/>
            <person name="Okwuonu G."/>
            <person name="Palmer S."/>
            <person name="Pandian R."/>
            <person name="Parker D."/>
            <person name="Parrish J."/>
            <person name="Pasternak S."/>
            <person name="Patel D."/>
            <person name="Pearce A.V."/>
            <person name="Pearson D.M."/>
            <person name="Pelan S.E."/>
            <person name="Perez L."/>
            <person name="Porter K.M."/>
            <person name="Ramsey Y."/>
            <person name="Reichwald K."/>
            <person name="Rhodes S."/>
            <person name="Ridler K.A."/>
            <person name="Schlessinger D."/>
            <person name="Schueler M.G."/>
            <person name="Sehra H.K."/>
            <person name="Shaw-Smith C."/>
            <person name="Shen H."/>
            <person name="Sheridan E.M."/>
            <person name="Shownkeen R."/>
            <person name="Skuce C.D."/>
            <person name="Smith M.L."/>
            <person name="Sotheran E.C."/>
            <person name="Steingruber H.E."/>
            <person name="Steward C.A."/>
            <person name="Storey R."/>
            <person name="Swann R.M."/>
            <person name="Swarbreck D."/>
            <person name="Tabor P.E."/>
            <person name="Taudien S."/>
            <person name="Taylor T."/>
            <person name="Teague B."/>
            <person name="Thomas K."/>
            <person name="Thorpe A."/>
            <person name="Timms K."/>
            <person name="Tracey A."/>
            <person name="Trevanion S."/>
            <person name="Tromans A.C."/>
            <person name="d'Urso M."/>
            <person name="Verduzco D."/>
            <person name="Villasana D."/>
            <person name="Waldron L."/>
            <person name="Wall M."/>
            <person name="Wang Q."/>
            <person name="Warren J."/>
            <person name="Warry G.L."/>
            <person name="Wei X."/>
            <person name="West A."/>
            <person name="Whitehead S.L."/>
            <person name="Whiteley M.N."/>
            <person name="Wilkinson J.E."/>
            <person name="Willey D.L."/>
            <person name="Williams G."/>
            <person name="Williams L."/>
            <person name="Williamson A."/>
            <person name="Williamson H."/>
            <person name="Wilming L."/>
            <person name="Woodmansey R.L."/>
            <person name="Wray P.W."/>
            <person name="Yen J."/>
            <person name="Zhang J."/>
            <person name="Zhou J."/>
            <person name="Zoghbi H."/>
            <person name="Zorilla S."/>
            <person name="Buck D."/>
            <person name="Reinhardt R."/>
            <person name="Poustka A."/>
            <person name="Rosenthal A."/>
            <person name="Lehrach H."/>
            <person name="Meindl A."/>
            <person name="Minx P.J."/>
            <person name="Hillier L.W."/>
            <person name="Willard H.F."/>
            <person name="Wilson R.K."/>
            <person name="Waterston R.H."/>
            <person name="Rice C.M."/>
            <person name="Vaudin M."/>
            <person name="Coulson A."/>
            <person name="Nelson D.L."/>
            <person name="Weinstock G."/>
            <person name="Sulston J.E."/>
            <person name="Durbin R.M."/>
            <person name="Hubbard T."/>
            <person name="Gibbs R.A."/>
            <person name="Beck S."/>
            <person name="Rogers J."/>
            <person name="Bentley D.R."/>
        </authorList>
    </citation>
    <scope>NUCLEOTIDE SEQUENCE [LARGE SCALE GENOMIC DNA]</scope>
</reference>
<reference key="5">
    <citation type="journal article" date="2004" name="Genome Res.">
        <title>The status, quality, and expansion of the NIH full-length cDNA project: the Mammalian Gene Collection (MGC).</title>
        <authorList>
            <consortium name="The MGC Project Team"/>
        </authorList>
    </citation>
    <scope>NUCLEOTIDE SEQUENCE [LARGE SCALE MRNA] (ISOFORMS 1; 3 AND 8)</scope>
</reference>
<reference key="6">
    <citation type="journal article" date="1999" name="Eur. J. Hum. Genet. Suppl.">
        <title>Expression of a novel transcript isoform of the EDA gene in human umbilical cord.</title>
        <authorList>
            <person name="Kobielak K."/>
            <person name="Kobielak A."/>
            <person name="Trzciak W.H."/>
        </authorList>
    </citation>
    <scope>TISSUE SPECIFICITY</scope>
    <scope>ALTERNATIVE SPLICING</scope>
</reference>
<reference key="7">
    <citation type="journal article" date="2000" name="Science">
        <title>Two-amino acid molecular switch in an epithelial morphogen that regulates binding to two distinct receptors.</title>
        <authorList>
            <person name="Yan M."/>
            <person name="Wang L.-C."/>
            <person name="Hymowitz S.G."/>
            <person name="Schilbach S."/>
            <person name="Lee J."/>
            <person name="Goddard A."/>
            <person name="de Vos A.M."/>
            <person name="Gao W.-Q."/>
            <person name="Dixit V.M."/>
        </authorList>
    </citation>
    <scope>FUNCTION</scope>
    <scope>RECEPTOR INTERACTION (ISOFORMS 1 AND 3)</scope>
</reference>
<reference key="8">
    <citation type="journal article" date="2001" name="Hum. Mol. Genet.">
        <title>Ectodysplasin is released by proteolytic shedding and binds to the EDAR protein.</title>
        <authorList>
            <person name="Elomaa O."/>
            <person name="Pulkkinen K."/>
            <person name="Hannelius U."/>
            <person name="Mikkola M."/>
            <person name="Saarialho-Kere U."/>
            <person name="Kere J."/>
        </authorList>
    </citation>
    <scope>PROTEOLYTIC PROCESSING</scope>
    <scope>CHARACTERIZATION OF VARIANT XHED CYS-153</scope>
    <scope>CHARACTERIZATION OF VARIANT HIS-156</scope>
</reference>
<reference key="9">
    <citation type="journal article" date="2001" name="Proc. Natl. Acad. Sci. U.S.A.">
        <title>Mutations within a furin consensus sequence block proteolytic release of ectodysplasin-A and cause X-linked hypohidrotic ectodermal dysplasia.</title>
        <authorList>
            <person name="Chen Y."/>
            <person name="Molloy S.S."/>
            <person name="Thomas L."/>
            <person name="Gambee J."/>
            <person name="Baechinger H.P."/>
            <person name="Ferguson B.M."/>
            <person name="Zonana J."/>
            <person name="Thomas G."/>
            <person name="Morris N.P."/>
        </authorList>
    </citation>
    <scope>CHARACTERIZATION OF VARIANTS XHED CYS-153; CYS-155; CYS-156; HIS-156 AND ASN-158</scope>
    <scope>MUTAGENESIS OF ARG-159</scope>
    <scope>CLEAVAGE SITE</scope>
</reference>
<reference key="10">
    <citation type="journal article" date="2003" name="Structure">
        <title>The crystal structures of EDA-A1 and EDA-A2: splice variants with distinct receptor specificity.</title>
        <authorList>
            <person name="Hymowitz S.G."/>
            <person name="Compaan D.M."/>
            <person name="Yan M."/>
            <person name="Wallweber H.J."/>
            <person name="Dixit V.M."/>
            <person name="Starovasnik M.A."/>
            <person name="de Vos A.M."/>
        </authorList>
    </citation>
    <scope>X-RAY CRYSTALLOGRAPHY (2.2 ANGSTROMS) OF 230-391</scope>
    <scope>SUBUNIT</scope>
    <scope>DISULFIDE BOND</scope>
</reference>
<reference key="11">
    <citation type="journal article" date="1998" name="Clin. Genet.">
        <title>A novel missense mutation (402C--&gt;T) in exon 1 in the EDA gene in a family with X-linked hypohidrotic ectodermal dysplasia.</title>
        <authorList>
            <person name="Hertz J.M."/>
            <person name="Noergaard Hansen K."/>
            <person name="Juncker I."/>
            <person name="Kjeldsen M."/>
            <person name="Gregersen N."/>
        </authorList>
    </citation>
    <scope>VARIANT XHED TYR-54</scope>
</reference>
<reference key="12">
    <citation type="journal article" date="1998" name="J. Med. Genet.">
        <title>Scarcity of mutations detected in families with X linked hypohidrotic ectodermal dysplasia: diagnostic implications.</title>
        <authorList>
            <person name="Ferguson B.M."/>
            <person name="Thomas N.S.T."/>
            <person name="Munoz F."/>
            <person name="Morgan D."/>
            <person name="Clarke A."/>
            <person name="Zonana J."/>
        </authorList>
    </citation>
    <scope>VARIANT XHED LYS-63</scope>
</reference>
<reference key="13">
    <citation type="journal article" date="1999" name="J. Invest. Dermatol.">
        <title>X-linked anhidrotic (hypohidrotic) ectodermal dysplasia caused by a novel mutation in EDA1 gene: 406T &gt; G (Leu55Arg).</title>
        <authorList>
            <person name="Martinez F."/>
            <person name="Millan J.M."/>
            <person name="Orellana C."/>
            <person name="Prieto F."/>
        </authorList>
    </citation>
    <scope>VARIANT XHED ARG-55</scope>
</reference>
<reference key="14">
    <citation type="journal article" date="2000" name="J. Invest. Dermatol.">
        <title>A novel arginine--&gt;Serine mutation in EDA1 in a Japanese family with X-linked anhidrotic ectodermal dysplasia.</title>
        <authorList>
            <person name="Aoki N."/>
            <person name="Ito K."/>
            <person name="Tachibana T."/>
            <person name="Ito M."/>
        </authorList>
    </citation>
    <scope>VARIANT XHED SER-156</scope>
</reference>
<reference key="15">
    <citation type="journal article" date="2001" name="Am. J. Med. Genet.">
        <title>Mutations in the EDA gene in three unrelated families reveal no apparent correlation between phenotype and genotype in the patients with an X-linked anhidrotic ectodermal dysplasia.</title>
        <authorList>
            <person name="Kobielak K."/>
            <person name="Kobielak A."/>
            <person name="Roszkiewicz J."/>
            <person name="Wierzba J."/>
            <person name="Limon J."/>
            <person name="Trzeciak W.H."/>
        </authorList>
    </citation>
    <scope>VARIANTS XHED THR-349 AND ASN-360</scope>
</reference>
<reference key="16">
    <citation type="journal article" date="2001" name="Eur. J. Hum. Genet.">
        <title>Mutational spectrum of the ED1 gene in X-linked hypohidrotic ectodermal dysplasia.</title>
        <authorList>
            <person name="Vincent M.-C."/>
            <person name="Biancalana V."/>
            <person name="Ginisty D."/>
            <person name="Mandel J.-L."/>
            <person name="Calvas P."/>
        </authorList>
    </citation>
    <scope>VARIANTS XHED ARG-60; TYR-252; VAL-269; SER-302 AND MET-378</scope>
</reference>
<reference key="17">
    <citation type="journal article" date="2001" name="Hum. Mutat.">
        <title>The mutation spectrum of the EDA gene in X-linked anhidrotic ectodermal dysplasia.</title>
        <authorList>
            <person name="Paeaekkoenen K."/>
            <person name="Cambiaghi S."/>
            <person name="Novelli G."/>
            <person name="Ouzts L.V."/>
            <person name="Penttinen M."/>
            <person name="Kere J."/>
            <person name="Srivastava A.K."/>
        </authorList>
    </citation>
    <scope>VARIANTS XHED CYS-156; HIS-156; CYS-255; ASP-255; GLY-274; TYR-332 AND THR-349</scope>
</reference>
<reference key="18">
    <citation type="journal article" date="2001" name="J. Biol. Chem.">
        <title>Mutations leading to X-linked hypohidrotic ectodermal dysplasia affect three major functional domains in the tumor necrosis factor family member ectodysplasin-A.</title>
        <authorList>
            <person name="Schneider P."/>
            <person name="Street S.L."/>
            <person name="Gaide O."/>
            <person name="Hertig S."/>
            <person name="Tardivel A."/>
            <person name="Tschopp J."/>
            <person name="Runkel L."/>
            <person name="Alevizopoulos K."/>
            <person name="Ferguson B.M."/>
            <person name="Zonana J."/>
        </authorList>
    </citation>
    <scope>VARIANTS XHED CYS-153; CYS-155; CYS-156; HIS-156; ASN-158; 183-GLY--PRO-194 DEL; 185-ASN--PRO-196 DEL; GLU-189; 191-PRO--PRO-196 DEL; ARG-207; ASP-218; 218-GLY--PRO-223 DEL; ARG-291; SER-299; CYS-320; CYS-343; ARG-374; PRO-378 AND MET-378</scope>
</reference>
<reference key="19">
    <citation type="journal article" date="2002" name="Arch. Dermatol.">
        <title>Pitfalls in clinical diagnosis of female carriers of X-linked hypohidrotic ectodermal dysplasia.</title>
        <authorList>
            <person name="Vincent M.-C."/>
            <person name="Cossee M."/>
            <person name="Vabres P."/>
            <person name="Stewart F."/>
            <person name="Bonneau D."/>
            <person name="Calvas P."/>
        </authorList>
    </citation>
    <scope>VARIANTS XHED ALA-198 AND MET-378</scope>
</reference>
<reference key="20">
    <citation type="journal article" date="2003" name="Br. J. Dermatol.">
        <title>A novel missense mutation (Gln306His) in exon 7 of the ED1 gene causing anhidrotic ectodermal dysplasia with prominent milia-like facial sebaceous papules.</title>
        <authorList>
            <person name="Hsu M.M.L."/>
            <person name="Chao S.C."/>
            <person name="Lu A.C.H."/>
        </authorList>
    </citation>
    <scope>VARIANT XHED HIS-306</scope>
</reference>
<reference key="21">
    <citation type="journal article" date="2006" name="J. Hum. Genet.">
        <title>A novel missense mutation of the EDA gene in a Mongolian family with congenital hypodontia.</title>
        <authorList>
            <person name="Tao R."/>
            <person name="Jin B."/>
            <person name="Guo S.Z."/>
            <person name="Qing W."/>
            <person name="Feng G.Y."/>
            <person name="Brooks D.G."/>
            <person name="Liu L."/>
            <person name="Xu J."/>
            <person name="Li T."/>
            <person name="Yan Y."/>
            <person name="He L."/>
        </authorList>
    </citation>
    <scope>INVOLVEMENT IN STHAGX1</scope>
    <scope>VARIANT STHAGX1 GLY-65</scope>
</reference>
<reference key="22">
    <citation type="journal article" date="2006" name="Science">
        <title>The consensus coding sequences of human breast and colorectal cancers.</title>
        <authorList>
            <person name="Sjoeblom T."/>
            <person name="Jones S."/>
            <person name="Wood L.D."/>
            <person name="Parsons D.W."/>
            <person name="Lin J."/>
            <person name="Barber T.D."/>
            <person name="Mandelker D."/>
            <person name="Leary R.J."/>
            <person name="Ptak J."/>
            <person name="Silliman N."/>
            <person name="Szabo S."/>
            <person name="Buckhaults P."/>
            <person name="Farrell C."/>
            <person name="Meeh P."/>
            <person name="Markowitz S.D."/>
            <person name="Willis J."/>
            <person name="Dawson D."/>
            <person name="Willson J.K.V."/>
            <person name="Gazdar A.F."/>
            <person name="Hartigan J."/>
            <person name="Wu L."/>
            <person name="Liu C."/>
            <person name="Parmigiani G."/>
            <person name="Park B.H."/>
            <person name="Bachman K.E."/>
            <person name="Papadopoulos N."/>
            <person name="Vogelstein B."/>
            <person name="Kinzler K.W."/>
            <person name="Velculescu V.E."/>
        </authorList>
    </citation>
    <scope>VARIANT [LARGE SCALE ANALYSIS] LEU-118</scope>
</reference>
<reference key="23">
    <citation type="journal article" date="2007" name="Am. J. Med. Genet. A">
        <title>A novel Gln358Glu mutation in ectodysplasin A associated with X-linked dominant incisor hypodontia.</title>
        <authorList>
            <person name="Tarpey P."/>
            <person name="Pemberton T.J."/>
            <person name="Stockton D.W."/>
            <person name="Das P."/>
            <person name="Ninis V."/>
            <person name="Edkins S."/>
            <person name="Andrew Futreal P."/>
            <person name="Wooster R."/>
            <person name="Kamath S."/>
            <person name="Nayak R."/>
            <person name="Stratton M.R."/>
            <person name="Patel P.I."/>
        </authorList>
    </citation>
    <scope>VARIANT XHED GLU-358</scope>
</reference>
<reference key="24">
    <citation type="journal article" date="2008" name="Eur. J. Hum. Genet.">
        <title>Mutation screening of the ectodysplasin-A receptor gene EDAR in hypohidrotic ectodermal dysplasia.</title>
        <authorList>
            <person name="van der Hout A.H."/>
            <person name="Oudesluijs G.G."/>
            <person name="Venema A."/>
            <person name="Verheij J.B.G.M."/>
            <person name="Mol B.G.J."/>
            <person name="Rump P."/>
            <person name="Brunner H.G."/>
            <person name="Vos Y.J."/>
            <person name="van Essen A.J."/>
        </authorList>
    </citation>
    <scope>VARIANTS XHED CYS-155; CYS-156; HIS-156; 183-GLY--PRO-194 DEL; 184-PRO--GLY-189 DEL; 185-ASN--PRO-196 DEL; ARG-291; TYR-298; GLY-307; ASP-372 AND ILE-373</scope>
</reference>
<reference key="25">
    <citation type="journal article" date="2008" name="Eur. J. Med. Genet.">
        <title>Novel EDA mutation resulting in X-linked non-syndromic hypodontia and the pattern of EDA-associated isolated tooth agenesis.</title>
        <authorList>
            <person name="Han D."/>
            <person name="Gong Y."/>
            <person name="Wu H."/>
            <person name="Zhang X."/>
            <person name="Yan M."/>
            <person name="Wang X."/>
            <person name="Qu H."/>
            <person name="Feng H."/>
            <person name="Song S."/>
        </authorList>
    </citation>
    <scope>VARIANT STHAGX1 MET-338</scope>
</reference>
<reference key="26">
    <citation type="journal article" date="2009" name="Clin. Genet.">
        <title>Identification of mutations in the EDA and EDAR genes in Pakistani families with hypohidrotic ectodermal dysplasia.</title>
        <authorList>
            <person name="Shimomura Y."/>
            <person name="Wajid M."/>
            <person name="Weiser J."/>
            <person name="Kraemer L."/>
            <person name="Ishii Y."/>
            <person name="Lombillo V."/>
            <person name="Bale S.J."/>
            <person name="Christiano A.M."/>
        </authorList>
    </citation>
    <scope>VARIANTS XHED CYS-153; CYS-155 AND THR-349</scope>
</reference>
<reference key="27">
    <citation type="journal article" date="2009" name="J. Dent. Res.">
        <title>EDA gene mutations underlie non-syndromic oligodontia.</title>
        <authorList>
            <person name="Song S."/>
            <person name="Han D."/>
            <person name="Qu H."/>
            <person name="Gong Y."/>
            <person name="Wu H."/>
            <person name="Zhang X."/>
            <person name="Zhong N."/>
            <person name="Feng H."/>
        </authorList>
    </citation>
    <scope>VARIANTS STHAGX1 GLU-259; CYS-289 AND HIS-334</scope>
</reference>
<reference key="28">
    <citation type="journal article" date="2009" name="Pediatr. Res.">
        <title>Two novel mutations in the ED1 gene in Japanese families with X-linked hypohidrotic ectodermal dysplasia.</title>
        <authorList>
            <person name="Gunadi X."/>
            <person name="Miura K."/>
            <person name="Ohta M."/>
            <person name="Sugano A."/>
            <person name="Lee M.J."/>
            <person name="Sato Y."/>
            <person name="Matsunaga A."/>
            <person name="Hayashi K."/>
            <person name="Horikawa T."/>
            <person name="Miki K."/>
            <person name="Wataya-Kaneda M."/>
            <person name="Katayama I."/>
            <person name="Nishigori C."/>
            <person name="Matsuo M."/>
            <person name="Takaoka Y."/>
            <person name="Nishio H."/>
        </authorList>
    </citation>
    <scope>VARIANT XHED ARG-381</scope>
</reference>
<reference key="29">
    <citation type="journal article" date="2010" name="Genet. Mol. Res.">
        <title>Missense mutation of the EDA gene in a Jordanian family with X-linked hypohidrotic ectodermal dysplasia: phenotypic appearance and speech problems.</title>
        <authorList>
            <person name="Khabour O.F."/>
            <person name="Mesmar F.S."/>
            <person name="Al-Tamimi F."/>
            <person name="Al-Batayneh O.B."/>
            <person name="Owais A.I."/>
        </authorList>
    </citation>
    <scope>VARIANT XHED CYS-155</scope>
</reference>
<reference key="30">
    <citation type="journal article" date="2011" name="Hum. Mutat.">
        <title>Only four genes (EDA1, EDAR, EDARADD, and WNT10A) account for 90% of hypohidrotic/anhidrotic ectodermal dysplasia cases.</title>
        <authorList>
            <person name="Cluzeau C."/>
            <person name="Hadj-Rabia S."/>
            <person name="Jambou M."/>
            <person name="Mansour S."/>
            <person name="Guigue P."/>
            <person name="Masmoudi S."/>
            <person name="Bal E."/>
            <person name="Chassaing N."/>
            <person name="Vincent M.C."/>
            <person name="Viot G."/>
            <person name="Clauss F."/>
            <person name="Maniere M.C."/>
            <person name="Toupenay S."/>
            <person name="Le Merrer M."/>
            <person name="Lyonnet S."/>
            <person name="Cormier-Daire V."/>
            <person name="Amiel J."/>
            <person name="Faivre L."/>
            <person name="de Prost Y."/>
            <person name="Munnich A."/>
            <person name="Bonnefont J.P."/>
            <person name="Bodemer C."/>
            <person name="Smahi A."/>
        </authorList>
    </citation>
    <scope>VARIANTS XHED GLY-156; 192-GLY--GLN-197 DEL; VAL-207; ARG-211; ARG-266; ARG-274; PRO-293; VAL-296; ASP-299; GLY-323; TYR-346 AND VAL-356</scope>
</reference>
<reference key="31">
    <citation type="journal article" date="2012" name="Gene">
        <title>Mutation p.Leu354Pro in EDA causes severe hypohidrotic ectodermal dysplasia in a Chinese family.</title>
        <authorList>
            <person name="Liu Y."/>
            <person name="Yu X."/>
            <person name="Wang L."/>
            <person name="Li C."/>
            <person name="Archacki S."/>
            <person name="Huang C."/>
            <person name="Liu J.Y."/>
            <person name="Wang Q."/>
            <person name="Liu M."/>
            <person name="Tang Z."/>
        </authorList>
    </citation>
    <scope>VARIANT XHED PRO-354</scope>
</reference>
<reference key="32">
    <citation type="journal article" date="2012" name="Minerva Pediatr.">
        <title>A new mutation in EDA gene in X-linked hypohidrotic ectodermal dysplasia associated with keratoconus.</title>
        <authorList>
            <person name="Piccione M."/>
            <person name="Serra G."/>
            <person name="Sanfilippo C."/>
            <person name="Andreucci E."/>
            <person name="Sani I."/>
            <person name="Corsello G."/>
        </authorList>
    </citation>
    <scope>VARIANT XHED ARG-319</scope>
</reference>
<reference key="33">
    <citation type="journal article" date="2013" name="J. Dent. Res.">
        <title>Novel EDA p.Ile260Ser mutation linked to non-syndromic hypodontia.</title>
        <authorList>
            <person name="Yang Y."/>
            <person name="Luo L."/>
            <person name="Xu J."/>
            <person name="Zhu P."/>
            <person name="Xue W."/>
            <person name="Wang J."/>
            <person name="Li W."/>
            <person name="Wang M."/>
            <person name="Cheng K."/>
            <person name="Liu S."/>
            <person name="Tang Z."/>
            <person name="Ring B.Z."/>
            <person name="Su L."/>
        </authorList>
    </citation>
    <scope>VARIANT STHAGX1 SER-260</scope>
</reference>
<reference key="34">
    <citation type="journal article" date="2013" name="J. Dent. Res.">
        <title>Non-syndromic tooth agenesis associated with a nonsense mutation in ectodysplasin-A (EDA).</title>
        <authorList>
            <person name="Nikopensius T."/>
            <person name="Annilo T."/>
            <person name="Jagomaegi T."/>
            <person name="Gilissen C."/>
            <person name="Kals M."/>
            <person name="Krjutskov K."/>
            <person name="Maegi R."/>
            <person name="Eelmets M."/>
            <person name="Gerst-Talas U."/>
            <person name="Remm M."/>
            <person name="Saag M."/>
            <person name="Hoischen A."/>
            <person name="Metspalu A."/>
        </authorList>
    </citation>
    <scope>INVOLVEMENT IN STHAGX1</scope>
</reference>
<reference key="35">
    <citation type="journal article" date="2014" name="J. Dent. Res.">
        <title>Oligodontia and curly hair occur with ectodysplasin-a mutations.</title>
        <authorList>
            <person name="Lee K.E."/>
            <person name="Ko J."/>
            <person name="Shin T.J."/>
            <person name="Hyun H.K."/>
            <person name="Lee S.H."/>
            <person name="Kim J.W."/>
        </authorList>
    </citation>
    <scope>VARIANTS STHAGX1 LEU-289 AND VAL-379</scope>
</reference>
<reference key="36">
    <citation type="journal article" date="2015" name="Clin. Genet.">
        <title>Phenotypic heterogeneity and mutational spectrum in a cohort of 45 Italian males subjects with X-linked ectodermal dysplasia.</title>
        <authorList>
            <person name="Guazzarotti L."/>
            <person name="Tadini G."/>
            <person name="Mancini G.E."/>
            <person name="Giglio S."/>
            <person name="Willoughby C.E."/>
            <person name="Callea M."/>
            <person name="Sani I."/>
            <person name="Nannini P."/>
            <person name="Mameli C."/>
            <person name="Tenconi A.A."/>
            <person name="Mauri S."/>
            <person name="Bottero A."/>
            <person name="Caimi A."/>
            <person name="Morelli M."/>
            <person name="Zuccotti G.V."/>
        </authorList>
    </citation>
    <scope>VARIANTS XHED GLN-51; CYS-125; PRO-132; HIS-153; CYS-155; HIS-156; 183-GLY--PRO-194 DEL; 185-ASN--PRO-196 DEL; 191-PRO--PRO-196 DEL; 193-PRO--GLY-201 DEL; 219-PRO--GLY-230 DEL; GLY-274; ARG-291; SER-299; HIS-304; GLU-316; ARG-319; SER-319 DEL; PHE-332; ASP-350; HIS-358 AND VAL-381</scope>
</reference>
<reference key="37">
    <citation type="journal article" date="2016" name="Genes (Basel)">
        <title>Eight mutations of three genes (EDA, EDAR, and WNT10A) identified in seven hypohidrotic ectodermal dysplasia patients.</title>
        <authorList>
            <person name="Zeng B."/>
            <person name="Xiao X."/>
            <person name="Li S."/>
            <person name="Lu H."/>
            <person name="Lu J."/>
            <person name="Zhu L."/>
            <person name="Yu D."/>
            <person name="Zhao W."/>
        </authorList>
    </citation>
    <scope>VARIANTS XHED CYS-155; ASP-221; SER-299 AND MET-338</scope>
</reference>
<reference key="38">
    <citation type="journal article" date="2016" name="PLoS ONE">
        <title>Functional study of ectodysplasin-a mutations causing non-syndromic tooth agenesis.</title>
        <authorList>
            <person name="Shen W."/>
            <person name="Wang Y."/>
            <person name="Liu Y."/>
            <person name="Liu H."/>
            <person name="Zhao H."/>
            <person name="Zhang G."/>
            <person name="Snead M.L."/>
            <person name="Han D."/>
            <person name="Feng H."/>
        </authorList>
    </citation>
    <scope>CHARACTERIZATION OF VARIANTS XHED LEU-252; CYS-343 AND ARG-374</scope>
    <scope>CHARACTERIZATION OF VARIANTS STHAGX1 GLU-259; CYS-289; HIS-334; CYS-343 AND ARG-374</scope>
    <scope>FUNCTION</scope>
</reference>
<reference key="39">
    <citation type="journal article" date="2021" name="Mol. Genet. Genomic Med.">
        <title>Two novel ectodysplasin A gene mutations and prenatal diagnosis of X-linked hypohidrotic ectodermal dysplasia.</title>
        <authorList>
            <person name="Yu K."/>
            <person name="Shen Y."/>
            <person name="Jiang C.L."/>
            <person name="Huang W."/>
            <person name="Wang F."/>
            <person name="Wu Y.Q."/>
        </authorList>
    </citation>
    <scope>VARIANTS XHED PRO-289; CYS-290 AND SER-379</scope>
    <scope>CHARACTERIZATION OF VARIANTS XHED PRO-289; CYS-290 AND SER-379</scope>
    <scope>FUNCTION</scope>
    <scope>SUBCELLULAR LOCATION</scope>
</reference>
<reference key="40">
    <citation type="journal article" date="2024" name="Oral Dis.">
        <title>Eight EDA mutations in Chinese patients with tooth agenesis and genotype-phenotype analysis.</title>
        <authorList>
            <person name="Yu K."/>
            <person name="Sheng Y."/>
            <person name="Wang F."/>
            <person name="Yang S."/>
            <person name="Wan F."/>
            <person name="Lei M."/>
            <person name="Wu Y."/>
        </authorList>
    </citation>
    <scope>VARIANTS XHED PRO-271; ARG-291; CYS-304; CYS-320 AND SER-379</scope>
    <scope>CHARACTERIZATION OF VARIANTS XHED PRO-271; ARG-291; CYS-304; CYS-320 AND SER-379</scope>
    <scope>VARIANTS STHAGX1 HIS-334; MET-338 AND ARG-358</scope>
    <scope>CHARACTERIZATION OF VARIANTS STHAGX1 HIS-334; MET-338 AND ARG-358</scope>
</reference>
<feature type="chain" id="PRO_0000034538" description="Ectodysplasin-A, membrane form">
    <location>
        <begin position="1"/>
        <end position="391"/>
    </location>
</feature>
<feature type="chain" id="PRO_0000034539" description="Ectodysplasin-A, secreted form" evidence="48">
    <location>
        <begin position="160"/>
        <end position="391"/>
    </location>
</feature>
<feature type="topological domain" description="Cytoplasmic" evidence="2">
    <location>
        <begin position="1"/>
        <end position="41"/>
    </location>
</feature>
<feature type="transmembrane region" description="Helical; Signal-anchor for type II membrane protein" evidence="2">
    <location>
        <begin position="42"/>
        <end position="62"/>
    </location>
</feature>
<feature type="topological domain" description="Extracellular" evidence="2">
    <location>
        <begin position="63"/>
        <end position="391"/>
    </location>
</feature>
<feature type="domain" description="Collagen-like">
    <location>
        <begin position="180"/>
        <end position="229"/>
    </location>
</feature>
<feature type="domain" description="THD" evidence="3">
    <location>
        <begin position="249"/>
        <end position="385"/>
    </location>
</feature>
<feature type="region of interest" description="Disordered" evidence="4">
    <location>
        <begin position="73"/>
        <end position="127"/>
    </location>
</feature>
<feature type="region of interest" description="Disordered" evidence="4">
    <location>
        <begin position="146"/>
        <end position="245"/>
    </location>
</feature>
<feature type="compositionally biased region" description="Low complexity" evidence="4">
    <location>
        <begin position="86"/>
        <end position="101"/>
    </location>
</feature>
<feature type="compositionally biased region" description="Polar residues" evidence="4">
    <location>
        <begin position="102"/>
        <end position="113"/>
    </location>
</feature>
<feature type="compositionally biased region" description="Pro residues" evidence="4">
    <location>
        <begin position="181"/>
        <end position="203"/>
    </location>
</feature>
<feature type="compositionally biased region" description="Pro residues" evidence="4">
    <location>
        <begin position="216"/>
        <end position="228"/>
    </location>
</feature>
<feature type="site" description="Cleavage; by furin" evidence="13">
    <location>
        <begin position="159"/>
        <end position="160"/>
    </location>
</feature>
<feature type="glycosylation site" description="N-linked (GlcNAc...) asparagine" evidence="2">
    <location>
        <position position="313"/>
    </location>
</feature>
<feature type="glycosylation site" description="N-linked (GlcNAc...) asparagine" evidence="2">
    <location>
        <position position="372"/>
    </location>
</feature>
<feature type="disulfide bond" evidence="3 16 49">
    <location>
        <begin position="332"/>
        <end position="346"/>
    </location>
</feature>
<feature type="splice variant" id="VSP_006458" description="In isoform 4." evidence="46">
    <original>MALLNFFFPDEKPYS</original>
    <variation>VSHLVGAAAAPSPRG</variation>
    <location>
        <begin position="133"/>
        <end position="147"/>
    </location>
</feature>
<feature type="splice variant" id="VSP_006459" description="In isoform 6." evidence="46">
    <original>MALLNFFFPDEKPYS</original>
    <variation>DFDYIISFSYGLQGFC</variation>
    <location>
        <begin position="133"/>
        <end position="147"/>
    </location>
</feature>
<feature type="splice variant" id="VSP_006460" description="In isoform 7." evidence="46">
    <original>MALLNFFFPDEKPYS</original>
    <variation>LHVSFSLRKKKAGHQ</variation>
    <location>
        <begin position="133"/>
        <end position="147"/>
    </location>
</feature>
<feature type="splice variant" id="VSP_006456" description="In isoform 5." evidence="46">
    <original>MALLNFFFPD</original>
    <variation>ACFPQVLLSL</variation>
    <location>
        <begin position="133"/>
        <end position="142"/>
    </location>
</feature>
<feature type="splice variant" id="VSP_006454" description="In isoform 2." evidence="45">
    <original>MAL</original>
    <variation>GHQ</variation>
    <location>
        <begin position="133"/>
        <end position="135"/>
    </location>
</feature>
<feature type="splice variant" id="VSP_006455" description="In isoform 2." evidence="45">
    <location>
        <begin position="136"/>
        <end position="391"/>
    </location>
</feature>
<feature type="splice variant" id="VSP_006457" description="In isoform 5." evidence="46">
    <location>
        <begin position="143"/>
        <end position="391"/>
    </location>
</feature>
<feature type="splice variant" id="VSP_006461" description="In isoform 4, isoform 6 and isoform 7." evidence="46">
    <location>
        <begin position="148"/>
        <end position="391"/>
    </location>
</feature>
<feature type="splice variant" id="VSP_038402" description="In isoform 8." evidence="43">
    <location>
        <begin position="265"/>
        <end position="267"/>
    </location>
</feature>
<feature type="splice variant" id="VSP_006464" description="In isoform 3 and isoform 8." evidence="43 46">
    <location>
        <begin position="307"/>
        <end position="308"/>
    </location>
</feature>
<feature type="sequence variant" id="VAR_075310" description="In XHED; uncertain significance." evidence="32">
    <original>L</original>
    <variation>Q</variation>
    <location>
        <position position="51"/>
    </location>
</feature>
<feature type="sequence variant" id="VAR_010611" description="In XHED." evidence="39">
    <original>H</original>
    <variation>Y</variation>
    <location>
        <position position="54"/>
    </location>
</feature>
<feature type="sequence variant" id="VAR_010612" description="In XHED." evidence="5">
    <original>L</original>
    <variation>R</variation>
    <location>
        <position position="55"/>
    </location>
</feature>
<feature type="sequence variant" id="VAR_013484" description="In XHED." evidence="12">
    <original>C</original>
    <variation>R</variation>
    <location>
        <position position="60"/>
    </location>
</feature>
<feature type="sequence variant" id="VAR_005179" description="In XHED; dbSNP:rs132630308." evidence="37">
    <original>Y</original>
    <variation>H</variation>
    <location>
        <position position="61"/>
    </location>
</feature>
<feature type="sequence variant" id="VAR_005180" description="In XHED; dbSNP:rs132630311." evidence="38">
    <original>E</original>
    <variation>K</variation>
    <location>
        <position position="63"/>
    </location>
</feature>
<feature type="sequence variant" id="VAR_029534" description="In STHAGX1; dbSNP:rs132630319." evidence="17">
    <original>R</original>
    <variation>G</variation>
    <location>
        <position position="65"/>
    </location>
</feature>
<feature type="sequence variant" id="VAR_005181" description="In XHED; dbSNP:rs132630309." evidence="37">
    <original>R</original>
    <variation>L</variation>
    <location>
        <position position="69"/>
    </location>
</feature>
<feature type="sequence variant" id="VAR_036590" description="In a colorectal cancer sample; somatic mutation." evidence="18">
    <original>P</original>
    <variation>L</variation>
    <location>
        <position position="118"/>
    </location>
</feature>
<feature type="sequence variant" id="VAR_075311" description="In XHED; uncertain significance." evidence="32">
    <original>S</original>
    <variation>C</variation>
    <location>
        <position position="125"/>
    </location>
</feature>
<feature type="sequence variant" id="VAR_075312" description="In XHED; uncertain significance." evidence="32">
    <original>Q</original>
    <variation>P</variation>
    <location>
        <position position="132"/>
    </location>
</feature>
<feature type="sequence variant" id="VAR_054454" description="In XHED; abolishes proteolytic processing; dbSNP:rs397516662." evidence="8 10 13 24">
    <original>R</original>
    <variation>C</variation>
    <location>
        <position position="153"/>
    </location>
</feature>
<feature type="sequence variant" id="VAR_075313" description="In XHED; likely benign; dbSNP:rs140642493." evidence="32">
    <original>R</original>
    <variation>H</variation>
    <location>
        <position position="153"/>
    </location>
</feature>
<feature type="sequence variant" id="VAR_005182" description="In XHED; abolishes proteolytic processing; dbSNP:rs132630312." evidence="8 13 20 24 25 32 34 40">
    <original>R</original>
    <variation>C</variation>
    <location>
        <position position="155"/>
    </location>
</feature>
<feature type="sequence variant" id="VAR_005183" description="In XHED; abolishes proteolytic processing; dbSNP:rs132630313." evidence="8 9 13 20 40 41">
    <original>R</original>
    <variation>C</variation>
    <location>
        <position position="156"/>
    </location>
</feature>
<feature type="sequence variant" id="VAR_064858" description="In XHED." evidence="26">
    <original>R</original>
    <variation>G</variation>
    <location>
        <position position="156"/>
    </location>
</feature>
<feature type="sequence variant" id="VAR_005184" description="In XHED; abolishes proteolytic processing; dbSNP:rs132630314." evidence="8 9 10 13 20 32 40">
    <original>R</original>
    <variation>H</variation>
    <location>
        <position position="156"/>
    </location>
</feature>
<feature type="sequence variant" id="VAR_054455" description="In XHED." evidence="6">
    <original>R</original>
    <variation>S</variation>
    <location>
        <position position="156"/>
    </location>
</feature>
<feature type="sequence variant" id="VAR_054456" description="In XHED; abolishes proteolytic processing; dbSNP:rs727504649." evidence="8 13">
    <original>K</original>
    <variation>N</variation>
    <location>
        <position position="158"/>
    </location>
</feature>
<feature type="sequence variant" id="VAR_054457" description="In XHED." evidence="8 20 32">
    <location>
        <begin position="183"/>
        <end position="194"/>
    </location>
</feature>
<feature type="sequence variant" id="VAR_054458" description="In XHED." evidence="20">
    <location>
        <begin position="184"/>
        <end position="189"/>
    </location>
</feature>
<feature type="sequence variant" id="VAR_054459" description="In XHED." evidence="8 20 32">
    <location>
        <begin position="185"/>
        <end position="196"/>
    </location>
</feature>
<feature type="sequence variant" id="VAR_054460" description="In XHED." evidence="8">
    <original>G</original>
    <variation>E</variation>
    <location>
        <position position="189"/>
    </location>
</feature>
<feature type="sequence variant" id="VAR_054461" description="In XHED." evidence="8 32">
    <location>
        <begin position="191"/>
        <end position="196"/>
    </location>
</feature>
<feature type="sequence variant" id="VAR_064859" description="In XHED." evidence="26">
    <location>
        <begin position="192"/>
        <end position="197"/>
    </location>
</feature>
<feature type="sequence variant" id="VAR_075314" description="In XHED; uncertain significance." evidence="32">
    <location>
        <begin position="193"/>
        <end position="201"/>
    </location>
</feature>
<feature type="sequence variant" id="VAR_054462" description="In XHED." evidence="14">
    <original>G</original>
    <variation>A</variation>
    <location>
        <position position="198"/>
    </location>
</feature>
<feature type="sequence variant" id="VAR_054463" description="In XHED; dbSNP:rs2147509825." evidence="8">
    <original>G</original>
    <variation>R</variation>
    <location>
        <position position="207"/>
    </location>
</feature>
<feature type="sequence variant" id="VAR_064860" description="In XHED." evidence="26">
    <original>G</original>
    <variation>V</variation>
    <location>
        <position position="207"/>
    </location>
</feature>
<feature type="sequence variant" id="VAR_005185" description="In XHED; dbSNP:rs132630315." evidence="40">
    <original>P</original>
    <variation>L</variation>
    <location>
        <position position="209"/>
    </location>
</feature>
<feature type="sequence variant" id="VAR_064861" description="In XHED; dbSNP:rs2147509853." evidence="26">
    <original>T</original>
    <variation>R</variation>
    <location>
        <position position="211"/>
    </location>
</feature>
<feature type="sequence variant" id="VAR_054465" description="In XHED." evidence="8">
    <location>
        <begin position="218"/>
        <end position="223"/>
    </location>
</feature>
<feature type="sequence variant" id="VAR_054464" description="In XHED." evidence="8">
    <original>G</original>
    <variation>D</variation>
    <location>
        <position position="218"/>
    </location>
</feature>
<feature type="sequence variant" id="VAR_075315" description="In XHED; uncertain significance." evidence="32">
    <location>
        <begin position="219"/>
        <end position="230"/>
    </location>
</feature>
<feature type="sequence variant" id="VAR_077561" description="In XHED; uncertain significance." evidence="34">
    <original>G</original>
    <variation>D</variation>
    <location>
        <position position="221"/>
    </location>
</feature>
<feature type="sequence variant" id="VAR_005186" description="In XHED; dbSNP:rs132630316." evidence="40">
    <original>G</original>
    <variation>A</variation>
    <location>
        <position position="224"/>
    </location>
</feature>
<feature type="sequence variant" id="VAR_005187" description="In XHED; loss of interaction with EDAR for isoform 1; decreased interaction with EDA2R for isoform 3; changed downstream signaling; dbSNP:rs879255552." evidence="40">
    <original>H</original>
    <variation>L</variation>
    <location>
        <position position="252"/>
    </location>
</feature>
<feature type="sequence variant" id="VAR_013485" description="In XHED." evidence="12">
    <original>H</original>
    <variation>Y</variation>
    <location>
        <position position="252"/>
    </location>
</feature>
<feature type="sequence variant" id="VAR_011077" description="In XHED." evidence="9">
    <original>G</original>
    <variation>C</variation>
    <location>
        <position position="255"/>
    </location>
</feature>
<feature type="sequence variant" id="VAR_011078" description="In XHED; mild; dbSNP:rs1064793105." evidence="9">
    <original>G</original>
    <variation>D</variation>
    <location>
        <position position="255"/>
    </location>
</feature>
<feature type="sequence variant" id="VAR_071454" description="In STHAGX1; decreased interaction with EDAR for isoform 1; decreased interaction with EDA2R for isoform 3; changed downstream signaling; dbSNP:rs879255611." evidence="23">
    <original>A</original>
    <variation>E</variation>
    <location>
        <position position="259"/>
    </location>
</feature>
<feature type="sequence variant" id="VAR_071455" description="In STHAGX1." evidence="30">
    <original>I</original>
    <variation>S</variation>
    <location>
        <position position="260"/>
    </location>
</feature>
<feature type="sequence variant" id="VAR_064862" description="In XHED." evidence="26">
    <original>L</original>
    <variation>R</variation>
    <location>
        <position position="266"/>
    </location>
</feature>
<feature type="sequence variant" id="VAR_013486" description="In XHED." evidence="12">
    <original>G</original>
    <variation>V</variation>
    <location>
        <position position="269"/>
    </location>
</feature>
<feature type="sequence variant" id="VAR_089560" description="In XHED; likely pathogenic; loss of function in positive regulation of canonical NF-kappaB signal transduction." evidence="36">
    <original>L</original>
    <variation>P</variation>
    <location>
        <position position="271"/>
    </location>
</feature>
<feature type="sequence variant" id="VAR_011079" description="In XHED." evidence="9 32">
    <original>W</original>
    <variation>G</variation>
    <location>
        <position position="274"/>
    </location>
</feature>
<feature type="sequence variant" id="VAR_064863" description="In XHED." evidence="26">
    <original>W</original>
    <variation>R</variation>
    <location>
        <position position="274"/>
    </location>
</feature>
<feature type="sequence variant" id="VAR_071456" description="In STHAGX1; decreased interaction with EDAR for isoform 1; decreased interaction with EDA2R for isoform 3; changed downstream signaling; dbSNP:rs879255551." evidence="23">
    <original>R</original>
    <variation>C</variation>
    <location>
        <position position="289"/>
    </location>
</feature>
<feature type="sequence variant" id="VAR_071457" description="In STHAGX1." evidence="31">
    <original>R</original>
    <variation>L</variation>
    <location>
        <position position="289"/>
    </location>
</feature>
<feature type="sequence variant" id="VAR_085684" description="In XHED; when associated in cis with C-290; loss of function in EDAR-mediated signaling when associated in cis with C-290; not secreted when associated in cis with C-290; dbSNP:rs876657641." evidence="35">
    <original>R</original>
    <variation>P</variation>
    <location>
        <position position="289"/>
    </location>
</feature>
<feature type="sequence variant" id="VAR_085685" description="In XHED; when associated in cis with P-289; loss of function in EDAR-mediated signaling when associated in cis with P-289; not secreted when associated in cis with P-289; dbSNP:rs2147516451." evidence="35">
    <original>S</original>
    <variation>C</variation>
    <location>
        <position position="290"/>
    </location>
</feature>
<feature type="sequence variant" id="VAR_010613" description="In XHED; likely pathogenic; loss of function in positive regulation of canonical NF-kappaB signal transduction; dbSNP:rs397516677." evidence="8 20 32 36 41">
    <original>G</original>
    <variation>R</variation>
    <location>
        <position position="291"/>
    </location>
</feature>
<feature type="sequence variant" id="VAR_010614" description="In XHED." evidence="41">
    <original>G</original>
    <variation>W</variation>
    <location>
        <position position="291"/>
    </location>
</feature>
<feature type="sequence variant" id="VAR_064864" description="In XHED." evidence="26">
    <original>L</original>
    <variation>P</variation>
    <location>
        <position position="293"/>
    </location>
</feature>
<feature type="sequence variant" id="VAR_064865" description="In XHED." evidence="26">
    <original>L</original>
    <variation>V</variation>
    <location>
        <position position="296"/>
    </location>
</feature>
<feature type="sequence variant" id="VAR_010615" description="In XHED." evidence="41">
    <original>D</original>
    <variation>H</variation>
    <location>
        <position position="298"/>
    </location>
</feature>
<feature type="sequence variant" id="VAR_054466" description="In XHED." evidence="20">
    <original>D</original>
    <variation>Y</variation>
    <location>
        <position position="298"/>
    </location>
</feature>
<feature type="sequence variant" id="VAR_064866" description="In XHED; dbSNP:rs2147516523." evidence="26">
    <original>G</original>
    <variation>D</variation>
    <location>
        <position position="299"/>
    </location>
</feature>
<feature type="sequence variant" id="VAR_005188" description="In XHED; dbSNP:rs397516679." evidence="8 32 34 40 41">
    <original>G</original>
    <variation>S</variation>
    <location>
        <position position="299"/>
    </location>
</feature>
<feature type="sequence variant" id="VAR_013487" description="In XHED." evidence="12">
    <original>F</original>
    <variation>S</variation>
    <location>
        <position position="302"/>
    </location>
</feature>
<feature type="sequence variant" id="VAR_089561" description="In XHED; likely pathogenic; loss of function in positive regulation of canonical NF-kappaB signal transduction." evidence="36">
    <original>Y</original>
    <variation>C</variation>
    <location>
        <position position="304"/>
    </location>
</feature>
<feature type="sequence variant" id="VAR_075316" description="In XHED; likely pathogenic." evidence="32">
    <original>Y</original>
    <variation>H</variation>
    <location>
        <position position="304"/>
    </location>
</feature>
<feature type="sequence variant" id="VAR_054467" description="In XHED." evidence="15">
    <original>Q</original>
    <variation>H</variation>
    <location>
        <position position="306"/>
    </location>
</feature>
<feature type="sequence variant" id="VAR_054468" description="In XHED." evidence="20">
    <original>V</original>
    <variation>G</variation>
    <location>
        <position position="307"/>
    </location>
</feature>
<feature type="sequence variant" id="VAR_075317" description="In XHED; uncertain significance." evidence="32">
    <original>D</original>
    <variation>E</variation>
    <location>
        <position position="316"/>
    </location>
</feature>
<feature type="sequence variant" id="VAR_067319" description="In XHED." evidence="28 32">
    <original>S</original>
    <variation>R</variation>
    <location>
        <position position="319"/>
    </location>
</feature>
<feature type="sequence variant" id="VAR_054469" description="In XHED; likely pathogenic; loss of function in positive regulation of canonical NF-kappaB signal transduction." evidence="8 36">
    <original>Y</original>
    <variation>C</variation>
    <location>
        <position position="320"/>
    </location>
</feature>
<feature type="sequence variant" id="VAR_064867" description="In XHED." evidence="26">
    <original>V</original>
    <variation>G</variation>
    <location>
        <position position="323"/>
    </location>
</feature>
<feature type="sequence variant" id="VAR_075318" description="In XHED; likely pathogenic." evidence="32">
    <original>C</original>
    <variation>F</variation>
    <location>
        <position position="332"/>
    </location>
</feature>
<feature type="sequence variant" id="VAR_011080" description="In XHED; dbSNP:rs1602624745." evidence="9">
    <original>C</original>
    <variation>Y</variation>
    <location>
        <position position="332"/>
    </location>
</feature>
<feature type="sequence variant" id="VAR_071458" description="In STHAGX1; uncertain significance; decreased interaction with EDAR for isoform 1; decreased interaction with EDA2R for isoform 3; changed downstream signaling; mildly decreased function in positive regulation of canonical NF-kappaB signal transduction; dbSNP:rs142948132." evidence="23 36">
    <original>R</original>
    <variation>H</variation>
    <location>
        <position position="334"/>
    </location>
</feature>
<feature type="sequence variant" id="VAR_064868" description="In STHAGX1 and XHED; likely pathogenic; decreased function in positive regulation of canonical NF-kappaB signal transduction; dbSNP:rs132630321." evidence="21 34 36">
    <original>T</original>
    <variation>M</variation>
    <location>
        <position position="338"/>
    </location>
</feature>
<feature type="sequence variant" id="VAR_054470" description="In XHED; loss of interaction with EDAR for isoform 1; decreased interaction with EDA2R for isoform 3; changed downstream signaling." evidence="8">
    <original>Y</original>
    <variation>C</variation>
    <location>
        <position position="343"/>
    </location>
</feature>
<feature type="sequence variant" id="VAR_064869" description="In XHED." evidence="26">
    <original>C</original>
    <variation>Y</variation>
    <location>
        <position position="346"/>
    </location>
</feature>
<feature type="sequence variant" id="VAR_005189" description="In XHED; dbSNP:rs132630317." evidence="9 11 24 40">
    <original>A</original>
    <variation>T</variation>
    <location>
        <position position="349"/>
    </location>
</feature>
<feature type="sequence variant" id="VAR_075319" description="In XHED; likely pathogenic." evidence="32">
    <original>G</original>
    <variation>D</variation>
    <location>
        <position position="350"/>
    </location>
</feature>
<feature type="sequence variant" id="VAR_067250" description="In XHED." evidence="27">
    <original>L</original>
    <variation>P</variation>
    <location>
        <position position="354"/>
    </location>
</feature>
<feature type="sequence variant" id="VAR_005190" description="In XHED; dbSNP:rs876657639." evidence="40">
    <original>A</original>
    <variation>D</variation>
    <location>
        <position position="356"/>
    </location>
</feature>
<feature type="sequence variant" id="VAR_064870" description="In XHED; dbSNP:rs876657639." evidence="26">
    <original>A</original>
    <variation>V</variation>
    <location>
        <position position="356"/>
    </location>
</feature>
<feature type="sequence variant" id="VAR_005191" description="In XHED; dbSNP:rs61747506." evidence="40">
    <original>R</original>
    <variation>P</variation>
    <location>
        <position position="357"/>
    </location>
</feature>
<feature type="sequence variant" id="VAR_054471" description="In XHED; dbSNP:rs132630320." evidence="19">
    <original>Q</original>
    <variation>E</variation>
    <location>
        <position position="358"/>
    </location>
</feature>
<feature type="sequence variant" id="VAR_075320" description="In XHED; likely pathogenic." evidence="32">
    <original>Q</original>
    <variation>H</variation>
    <location>
        <position position="358"/>
    </location>
</feature>
<feature type="sequence variant" id="VAR_089562" description="In STHAGX1; likely pathogenic; severely decreased function in positive regulation of canonical NF-kappaB signal transduction." evidence="36">
    <original>Q</original>
    <variation>R</variation>
    <location>
        <position position="358"/>
    </location>
</feature>
<feature type="sequence variant" id="VAR_054472" description="In XHED." evidence="11">
    <original>I</original>
    <variation>N</variation>
    <location>
        <position position="360"/>
    </location>
</feature>
<feature type="sequence variant" id="VAR_054473" description="In XHED." evidence="20">
    <original>N</original>
    <variation>D</variation>
    <location>
        <position position="372"/>
    </location>
</feature>
<feature type="sequence variant" id="VAR_054474" description="In XHED." evidence="20">
    <original>M</original>
    <variation>I</variation>
    <location>
        <position position="373"/>
    </location>
</feature>
<feature type="sequence variant" id="VAR_054475" description="In XHED; decreased interaction with EDAR for isoform 1; decreased interaction with EDA2R for isoform 3; changed downstream signaling." evidence="8">
    <original>S</original>
    <variation>R</variation>
    <location>
        <position position="374"/>
    </location>
</feature>
<feature type="sequence variant" id="VAR_013488" description="In XHED; dbSNP:rs1569407346." evidence="8 12 14">
    <original>T</original>
    <variation>M</variation>
    <location>
        <position position="378"/>
    </location>
</feature>
<feature type="sequence variant" id="VAR_054476" description="In XHED." evidence="8">
    <original>T</original>
    <variation>P</variation>
    <location>
        <position position="378"/>
    </location>
</feature>
<feature type="sequence variant" id="VAR_085686" description="In XHED; likely pathogenic; loss of function in EDAR-mediated signaling; loss of function in positive regulation of canonical NF-kappaB signal transduction; not secreted; dbSNP:rs2147519384." evidence="35 36">
    <original>F</original>
    <variation>S</variation>
    <location>
        <position position="379"/>
    </location>
</feature>
<feature type="sequence variant" id="VAR_071459" description="In STHAGX1." evidence="31">
    <original>F</original>
    <variation>V</variation>
    <location>
        <position position="379"/>
    </location>
</feature>
<feature type="sequence variant" id="VAR_064871" description="In XHED." evidence="22">
    <original>G</original>
    <variation>R</variation>
    <location>
        <position position="381"/>
    </location>
</feature>
<feature type="sequence variant" id="VAR_075321" description="In XHED; likely pathogenic." evidence="32">
    <original>G</original>
    <variation>V</variation>
    <location>
        <position position="381"/>
    </location>
</feature>
<feature type="mutagenesis site" description="Abolishes proteolytic processing." evidence="13">
    <original>R</original>
    <variation>A</variation>
    <location>
        <position position="159"/>
    </location>
</feature>
<feature type="strand" evidence="51">
    <location>
        <begin position="249"/>
        <end position="254"/>
    </location>
</feature>
<feature type="strand" evidence="51">
    <location>
        <begin position="257"/>
        <end position="261"/>
    </location>
</feature>
<feature type="helix" evidence="51">
    <location>
        <begin position="262"/>
        <end position="264"/>
    </location>
</feature>
<feature type="helix" evidence="51">
    <location>
        <begin position="266"/>
        <end position="269"/>
    </location>
</feature>
<feature type="strand" evidence="51">
    <location>
        <begin position="275"/>
        <end position="279"/>
    </location>
</feature>
<feature type="turn" evidence="51">
    <location>
        <begin position="281"/>
        <end position="283"/>
    </location>
</feature>
<feature type="strand" evidence="51">
    <location>
        <begin position="284"/>
        <end position="286"/>
    </location>
</feature>
<feature type="turn" evidence="51">
    <location>
        <begin position="288"/>
        <end position="290"/>
    </location>
</feature>
<feature type="strand" evidence="51">
    <location>
        <begin position="293"/>
        <end position="295"/>
    </location>
</feature>
<feature type="strand" evidence="51">
    <location>
        <begin position="299"/>
        <end position="307"/>
    </location>
</feature>
<feature type="strand" evidence="51">
    <location>
        <begin position="310"/>
        <end position="316"/>
    </location>
</feature>
<feature type="strand" evidence="51">
    <location>
        <begin position="318"/>
        <end position="324"/>
    </location>
</feature>
<feature type="strand" evidence="51">
    <location>
        <begin position="327"/>
        <end position="336"/>
    </location>
</feature>
<feature type="strand" evidence="50">
    <location>
        <begin position="338"/>
        <end position="340"/>
    </location>
</feature>
<feature type="strand" evidence="51">
    <location>
        <begin position="342"/>
        <end position="354"/>
    </location>
</feature>
<feature type="strand" evidence="51">
    <location>
        <begin position="359"/>
        <end position="364"/>
    </location>
</feature>
<feature type="strand" evidence="52">
    <location>
        <begin position="366"/>
        <end position="368"/>
    </location>
</feature>
<feature type="strand" evidence="51">
    <location>
        <begin position="370"/>
        <end position="372"/>
    </location>
</feature>
<feature type="turn" evidence="51">
    <location>
        <begin position="375"/>
        <end position="377"/>
    </location>
</feature>
<feature type="strand" evidence="51">
    <location>
        <begin position="378"/>
        <end position="386"/>
    </location>
</feature>
<keyword id="KW-0002">3D-structure</keyword>
<keyword id="KW-0025">Alternative splicing</keyword>
<keyword id="KW-1003">Cell membrane</keyword>
<keyword id="KW-0165">Cleavage on pair of basic residues</keyword>
<keyword id="KW-0176">Collagen</keyword>
<keyword id="KW-0202">Cytokine</keyword>
<keyword id="KW-0217">Developmental protein</keyword>
<keyword id="KW-0221">Differentiation</keyword>
<keyword id="KW-0225">Disease variant</keyword>
<keyword id="KW-1015">Disulfide bond</keyword>
<keyword id="KW-0038">Ectodermal dysplasia</keyword>
<keyword id="KW-0325">Glycoprotein</keyword>
<keyword id="KW-0472">Membrane</keyword>
<keyword id="KW-1267">Proteomics identification</keyword>
<keyword id="KW-1185">Reference proteome</keyword>
<keyword id="KW-0964">Secreted</keyword>
<keyword id="KW-0735">Signal-anchor</keyword>
<keyword id="KW-0812">Transmembrane</keyword>
<keyword id="KW-1133">Transmembrane helix</keyword>
<accession>Q92838</accession>
<accession>A0AUZ2</accession>
<accession>A2A337</accession>
<accession>B7ZLU2</accession>
<accession>B7ZLU4</accession>
<accession>O75910</accession>
<accession>Q5JS00</accession>
<accession>Q5JUM7</accession>
<accession>Q9UP77</accession>
<accession>Q9Y6L0</accession>
<accession>Q9Y6L1</accession>
<accession>Q9Y6L2</accession>
<accession>Q9Y6L3</accession>
<accession>Q9Y6L4</accession>
<comment type="function">
    <text evidence="1 7 33 35 37">Cytokine which is involved in epithelial-mesenchymal signaling during morphogenesis of ectodermal organs. Functions as a ligand activating the DEATH-domain containing receptors EDAR and EDA2R (PubMed:11039935, PubMed:27144394, PubMed:34582123, PubMed:8696334). May also play a role in cell adhesion (By similarity).</text>
</comment>
<comment type="function">
    <molecule>Isoform 1</molecule>
    <text evidence="7 33">Binds only to the receptor EDAR, while isoform 3 binds exclusively to the receptor EDA2R.</text>
</comment>
<comment type="function">
    <molecule>Isoform 3</molecule>
    <text evidence="7 33">Binds only to the receptor EDA2R.</text>
</comment>
<comment type="subunit">
    <text evidence="16">Homotrimer. The homotrimers may then dimerize and form higher-order oligomers.</text>
</comment>
<comment type="interaction">
    <interactant intactId="EBI-529425">
        <id>Q92838</id>
    </interactant>
    <interactant intactId="EBI-721179">
        <id>P27449</id>
        <label>ATP6V0C</label>
    </interactant>
    <organismsDiffer>false</organismsDiffer>
    <experiments>4</experiments>
</comment>
<comment type="interaction">
    <interactant intactId="EBI-529425">
        <id>Q92838</id>
    </interactant>
    <interactant intactId="EBI-12019274">
        <id>Q4LDR2</id>
        <label>CTXN3</label>
    </interactant>
    <organismsDiffer>false</organismsDiffer>
    <experiments>3</experiments>
</comment>
<comment type="interaction">
    <interactant intactId="EBI-529425">
        <id>Q92838</id>
    </interactant>
    <interactant intactId="EBI-8646596">
        <id>P49447</id>
        <label>CYB561</label>
    </interactant>
    <organismsDiffer>false</organismsDiffer>
    <experiments>6</experiments>
</comment>
<comment type="interaction">
    <interactant intactId="EBI-529425">
        <id>Q92838</id>
    </interactant>
    <interactant intactId="EBI-8645574">
        <id>Q9UPQ8</id>
        <label>DOLK</label>
    </interactant>
    <organismsDiffer>false</organismsDiffer>
    <experiments>6</experiments>
</comment>
<comment type="interaction">
    <interactant intactId="EBI-529425">
        <id>Q92838</id>
    </interactant>
    <interactant intactId="EBI-4319440">
        <id>P54849</id>
        <label>EMP1</label>
    </interactant>
    <organismsDiffer>false</organismsDiffer>
    <experiments>3</experiments>
</comment>
<comment type="interaction">
    <interactant intactId="EBI-529425">
        <id>Q92838</id>
    </interactant>
    <interactant intactId="EBI-3907816">
        <id>P54852</id>
        <label>EMP3</label>
    </interactant>
    <organismsDiffer>false</organismsDiffer>
    <experiments>7</experiments>
</comment>
<comment type="interaction">
    <interactant intactId="EBI-529425">
        <id>Q92838</id>
    </interactant>
    <interactant intactId="EBI-6166686">
        <id>Q96F15</id>
        <label>GIMAP5</label>
    </interactant>
    <organismsDiffer>false</organismsDiffer>
    <experiments>6</experiments>
</comment>
<comment type="interaction">
    <interactant intactId="EBI-529425">
        <id>Q92838</id>
    </interactant>
    <interactant intactId="EBI-750776">
        <id>O95214</id>
        <label>LEPROTL1</label>
    </interactant>
    <organismsDiffer>false</organismsDiffer>
    <experiments>4</experiments>
</comment>
<comment type="interaction">
    <interactant intactId="EBI-529425">
        <id>Q92838</id>
    </interactant>
    <interactant intactId="EBI-10249700">
        <id>Q6FHL7</id>
        <label>LEPROTL1</label>
    </interactant>
    <organismsDiffer>false</organismsDiffer>
    <experiments>3</experiments>
</comment>
<comment type="interaction">
    <interactant intactId="EBI-529425">
        <id>Q92838</id>
    </interactant>
    <interactant intactId="EBI-12033434">
        <id>Q9UBY5</id>
        <label>LPAR3</label>
    </interactant>
    <organismsDiffer>false</organismsDiffer>
    <experiments>3</experiments>
</comment>
<comment type="interaction">
    <interactant intactId="EBI-529425">
        <id>Q92838</id>
    </interactant>
    <interactant intactId="EBI-3932027">
        <id>P21145</id>
        <label>MAL</label>
    </interactant>
    <organismsDiffer>false</organismsDiffer>
    <experiments>7</experiments>
</comment>
<comment type="interaction">
    <interactant intactId="EBI-529425">
        <id>Q92838</id>
    </interactant>
    <interactant intactId="EBI-12070086">
        <id>Q5J8X5</id>
        <label>MS4A13</label>
    </interactant>
    <organismsDiffer>false</organismsDiffer>
    <experiments>3</experiments>
</comment>
<comment type="interaction">
    <interactant intactId="EBI-529425">
        <id>Q92838</id>
    </interactant>
    <interactant intactId="EBI-10252783">
        <id>Q6P499</id>
        <label>NIPAL3</label>
    </interactant>
    <organismsDiffer>false</organismsDiffer>
    <experiments>8</experiments>
</comment>
<comment type="interaction">
    <interactant intactId="EBI-529425">
        <id>Q92838</id>
    </interactant>
    <interactant intactId="EBI-1044658">
        <id>Q9NRP0</id>
        <label>OSTC</label>
    </interactant>
    <organismsDiffer>false</organismsDiffer>
    <experiments>3</experiments>
</comment>
<comment type="interaction">
    <interactant intactId="EBI-529425">
        <id>Q92838</id>
    </interactant>
    <interactant intactId="EBI-10273677">
        <id>Q8TBU1</id>
        <label>OSTCL</label>
    </interactant>
    <organismsDiffer>false</organismsDiffer>
    <experiments>3</experiments>
</comment>
<comment type="interaction">
    <interactant intactId="EBI-529425">
        <id>Q92838</id>
    </interactant>
    <interactant intactId="EBI-692836">
        <id>P26678</id>
        <label>PLN</label>
    </interactant>
    <organismsDiffer>false</organismsDiffer>
    <experiments>11</experiments>
</comment>
<comment type="interaction">
    <interactant intactId="EBI-529425">
        <id>Q92838</id>
    </interactant>
    <interactant intactId="EBI-2845982">
        <id>Q01453</id>
        <label>PMP22</label>
    </interactant>
    <organismsDiffer>false</organismsDiffer>
    <experiments>3</experiments>
</comment>
<comment type="interaction">
    <interactant intactId="EBI-529425">
        <id>Q92838</id>
    </interactant>
    <interactant intactId="EBI-8652744">
        <id>Q96IW7</id>
        <label>SEC22A</label>
    </interactant>
    <organismsDiffer>false</organismsDiffer>
    <experiments>7</experiments>
</comment>
<comment type="interaction">
    <interactant intactId="EBI-529425">
        <id>Q92838</id>
    </interactant>
    <interactant intactId="EBI-10314552">
        <id>Q9NVC3</id>
        <label>SLC38A7</label>
    </interactant>
    <organismsDiffer>false</organismsDiffer>
    <experiments>3</experiments>
</comment>
<comment type="interaction">
    <interactant intactId="EBI-529425">
        <id>Q92838</id>
    </interactant>
    <interactant intactId="EBI-12038591">
        <id>Q69YG0</id>
        <label>TMEM42</label>
    </interactant>
    <organismsDiffer>false</organismsDiffer>
    <experiments>3</experiments>
</comment>
<comment type="interaction">
    <interactant intactId="EBI-529425">
        <id>Q92838</id>
    </interactant>
    <interactant intactId="EBI-12366453">
        <id>P56557</id>
        <label>TMEM50B</label>
    </interactant>
    <organismsDiffer>false</organismsDiffer>
    <experiments>3</experiments>
</comment>
<comment type="interaction">
    <interactant intactId="EBI-529425">
        <id>Q92838</id>
    </interactant>
    <interactant intactId="EBI-2852148">
        <id>Q9H2L4</id>
        <label>TMEM60</label>
    </interactant>
    <organismsDiffer>false</organismsDiffer>
    <experiments>3</experiments>
</comment>
<comment type="subcellular location">
    <subcellularLocation>
        <location evidence="1">Cell membrane</location>
        <topology evidence="1">Single-pass type II membrane protein</topology>
    </subcellularLocation>
</comment>
<comment type="subcellular location">
    <molecule>Ectodysplasin-A, secreted form</molecule>
    <subcellularLocation>
        <location evidence="10 35">Secreted</location>
    </subcellularLocation>
</comment>
<comment type="alternative products">
    <event type="alternative splicing"/>
    <isoform>
        <id>Q92838-1</id>
        <name>1</name>
        <name>A1</name>
        <name>II</name>
        <name evidence="44">EDA1</name>
        <sequence type="displayed"/>
    </isoform>
    <isoform>
        <id>Q92838-2</id>
        <name>2</name>
        <name>I</name>
        <sequence type="described" ref="VSP_006454 VSP_006455"/>
    </isoform>
    <isoform>
        <id>Q92838-3</id>
        <name>3</name>
        <name>A2</name>
        <name evidence="44">EDA2</name>
        <sequence type="described" ref="VSP_006464"/>
    </isoform>
    <isoform>
        <id>Q92838-5</id>
        <name>4</name>
        <name>C</name>
        <sequence type="described" ref="VSP_006458 VSP_006461"/>
    </isoform>
    <isoform>
        <id>Q92838-6</id>
        <name>5</name>
        <name>D</name>
        <sequence type="described" ref="VSP_006456 VSP_006457"/>
    </isoform>
    <isoform>
        <id>Q92838-7</id>
        <name>6</name>
        <name>E</name>
        <sequence type="described" ref="VSP_006459 VSP_006461"/>
    </isoform>
    <isoform>
        <id>Q92838-8</id>
        <name>7</name>
        <name>F</name>
        <sequence type="described" ref="VSP_006460 VSP_006461"/>
    </isoform>
    <isoform>
        <id>Q92838-9</id>
        <name>8</name>
        <sequence type="described" ref="VSP_038402 VSP_006464"/>
    </isoform>
    <text>Additional isoforms seem to exist.</text>
</comment>
<comment type="tissue specificity">
    <text evidence="42">Not abundant; expressed in specific cell types of ectodermal (but not mesodermal) origin of keratinocytes, hair follicles, sweat glands. Also in adult heart, liver, muscle, pancreas, prostate, fetal liver, uterus, small intestine and umbilical cord.</text>
</comment>
<comment type="PTM">
    <text evidence="1">N-glycosylated.</text>
</comment>
<comment type="PTM">
    <text evidence="13">Processing by furin produces a secreted form.</text>
</comment>
<comment type="disease" evidence="5 6 8 9 10 11 12 13 14 15 19 20 22 24 25 26 27 28 32 33 34 35 36 37 38 39 40 41">
    <disease id="DI-00430">
        <name>Ectodermal dysplasia 1, hypohidrotic, X-linked</name>
        <acronym>XHED</acronym>
        <description>A form of ectodermal dysplasia, a heterogeneous group of disorders due to abnormal development of two or more ectodermal structures. Characterized by sparse hair (atrichosis or hypotrichosis), abnormal or missing teeth and the inability to sweat due to the absence of sweat glands. It is the most common form of over 150 clinically distinct ectodermal dysplasias.</description>
        <dbReference type="MIM" id="305100"/>
    </disease>
    <text>The disease is caused by variants affecting the gene represented in this entry.</text>
</comment>
<comment type="disease" evidence="17 21 23 29 30 31 33 36">
    <disease id="DI-01788">
        <name>Tooth agenesis, selective, X-linked, 1</name>
        <acronym>STHAGX1</acronym>
        <description>A form of selective tooth agenesis, a common anomaly characterized by the congenital absence of one or more teeth. Selective tooth agenesis without associated systemic disorders has sometimes been divided into 2 types: oligodontia, defined as agenesis of 6 or more permanent teeth, and hypodontia, defined as agenesis of less than 6 teeth. The number in both cases does not include absence of third molars (wisdom teeth).</description>
        <dbReference type="MIM" id="313500"/>
    </disease>
    <text>The disease is caused by variants affecting the gene represented in this entry.</text>
</comment>
<comment type="miscellaneous">
    <molecule>Isoform 5</molecule>
    <text evidence="47">May be produced at very low levels due to a premature stop codon in the mRNA, leading to nonsense-mediated mRNA decay.</text>
</comment>
<comment type="similarity">
    <text evidence="47">Belongs to the tumor necrosis factor family.</text>
</comment>
<comment type="sequence caution" evidence="47">
    <conflict type="miscellaneous discrepancy">
        <sequence resource="EMBL-CDS" id="AAC77372"/>
    </conflict>
    <text>Intron retention.</text>
</comment>
<evidence type="ECO:0000250" key="1">
    <source>
        <dbReference type="UniProtKB" id="O54693"/>
    </source>
</evidence>
<evidence type="ECO:0000255" key="2"/>
<evidence type="ECO:0000255" key="3">
    <source>
        <dbReference type="PROSITE-ProRule" id="PRU01387"/>
    </source>
</evidence>
<evidence type="ECO:0000256" key="4">
    <source>
        <dbReference type="SAM" id="MobiDB-lite"/>
    </source>
</evidence>
<evidence type="ECO:0000269" key="5">
    <source>
    </source>
</evidence>
<evidence type="ECO:0000269" key="6">
    <source>
    </source>
</evidence>
<evidence type="ECO:0000269" key="7">
    <source>
    </source>
</evidence>
<evidence type="ECO:0000269" key="8">
    <source>
    </source>
</evidence>
<evidence type="ECO:0000269" key="9">
    <source>
    </source>
</evidence>
<evidence type="ECO:0000269" key="10">
    <source>
    </source>
</evidence>
<evidence type="ECO:0000269" key="11">
    <source>
    </source>
</evidence>
<evidence type="ECO:0000269" key="12">
    <source>
    </source>
</evidence>
<evidence type="ECO:0000269" key="13">
    <source>
    </source>
</evidence>
<evidence type="ECO:0000269" key="14">
    <source>
    </source>
</evidence>
<evidence type="ECO:0000269" key="15">
    <source>
    </source>
</evidence>
<evidence type="ECO:0000269" key="16">
    <source>
    </source>
</evidence>
<evidence type="ECO:0000269" key="17">
    <source>
    </source>
</evidence>
<evidence type="ECO:0000269" key="18">
    <source>
    </source>
</evidence>
<evidence type="ECO:0000269" key="19">
    <source>
    </source>
</evidence>
<evidence type="ECO:0000269" key="20">
    <source>
    </source>
</evidence>
<evidence type="ECO:0000269" key="21">
    <source>
    </source>
</evidence>
<evidence type="ECO:0000269" key="22">
    <source>
    </source>
</evidence>
<evidence type="ECO:0000269" key="23">
    <source>
    </source>
</evidence>
<evidence type="ECO:0000269" key="24">
    <source>
    </source>
</evidence>
<evidence type="ECO:0000269" key="25">
    <source>
    </source>
</evidence>
<evidence type="ECO:0000269" key="26">
    <source>
    </source>
</evidence>
<evidence type="ECO:0000269" key="27">
    <source>
    </source>
</evidence>
<evidence type="ECO:0000269" key="28">
    <source>
    </source>
</evidence>
<evidence type="ECO:0000269" key="29">
    <source>
    </source>
</evidence>
<evidence type="ECO:0000269" key="30">
    <source>
    </source>
</evidence>
<evidence type="ECO:0000269" key="31">
    <source>
    </source>
</evidence>
<evidence type="ECO:0000269" key="32">
    <source>
    </source>
</evidence>
<evidence type="ECO:0000269" key="33">
    <source>
    </source>
</evidence>
<evidence type="ECO:0000269" key="34">
    <source>
    </source>
</evidence>
<evidence type="ECO:0000269" key="35">
    <source>
    </source>
</evidence>
<evidence type="ECO:0000269" key="36">
    <source>
    </source>
</evidence>
<evidence type="ECO:0000269" key="37">
    <source>
    </source>
</evidence>
<evidence type="ECO:0000269" key="38">
    <source>
    </source>
</evidence>
<evidence type="ECO:0000269" key="39">
    <source>
    </source>
</evidence>
<evidence type="ECO:0000269" key="40">
    <source>
    </source>
</evidence>
<evidence type="ECO:0000269" key="41">
    <source>
    </source>
</evidence>
<evidence type="ECO:0000269" key="42">
    <source ref="6"/>
</evidence>
<evidence type="ECO:0000303" key="43">
    <source>
    </source>
</evidence>
<evidence type="ECO:0000303" key="44">
    <source>
    </source>
</evidence>
<evidence type="ECO:0000303" key="45">
    <source>
    </source>
</evidence>
<evidence type="ECO:0000303" key="46">
    <source>
    </source>
</evidence>
<evidence type="ECO:0000305" key="47"/>
<evidence type="ECO:0000305" key="48">
    <source>
    </source>
</evidence>
<evidence type="ECO:0007744" key="49">
    <source>
        <dbReference type="PDB" id="1RJ8"/>
    </source>
</evidence>
<evidence type="ECO:0007829" key="50">
    <source>
        <dbReference type="PDB" id="1RJ7"/>
    </source>
</evidence>
<evidence type="ECO:0007829" key="51">
    <source>
        <dbReference type="PDB" id="1RJ8"/>
    </source>
</evidence>
<evidence type="ECO:0007829" key="52">
    <source>
        <dbReference type="PDB" id="7X9G"/>
    </source>
</evidence>
<dbReference type="EMBL" id="U59227">
    <property type="protein sequence ID" value="AAC50678.1"/>
    <property type="molecule type" value="Genomic_DNA"/>
</dbReference>
<dbReference type="EMBL" id="U59228">
    <property type="protein sequence ID" value="AAC50679.1"/>
    <property type="molecule type" value="mRNA"/>
</dbReference>
<dbReference type="EMBL" id="AH006445">
    <property type="protein sequence ID" value="AAC36303.1"/>
    <property type="molecule type" value="Genomic_DNA"/>
</dbReference>
<dbReference type="EMBL" id="AF060999">
    <property type="protein sequence ID" value="AAC36302.1"/>
    <property type="molecule type" value="mRNA"/>
</dbReference>
<dbReference type="EMBL" id="AF040628">
    <property type="protein sequence ID" value="AAC77363.1"/>
    <property type="molecule type" value="mRNA"/>
</dbReference>
<dbReference type="EMBL" id="AF061189">
    <property type="protein sequence ID" value="AAC77371.1"/>
    <property type="molecule type" value="mRNA"/>
</dbReference>
<dbReference type="EMBL" id="AF061190">
    <property type="protein sequence ID" value="AAC77372.1"/>
    <property type="status" value="ALT_SEQ"/>
    <property type="molecule type" value="mRNA"/>
</dbReference>
<dbReference type="EMBL" id="AF061191">
    <property type="protein sequence ID" value="AAC77373.1"/>
    <property type="molecule type" value="mRNA"/>
</dbReference>
<dbReference type="EMBL" id="AF061192">
    <property type="protein sequence ID" value="AAC77374.1"/>
    <property type="molecule type" value="mRNA"/>
</dbReference>
<dbReference type="EMBL" id="AF061193">
    <property type="protein sequence ID" value="AAC77375.1"/>
    <property type="molecule type" value="mRNA"/>
</dbReference>
<dbReference type="EMBL" id="AF061194">
    <property type="protein sequence ID" value="AAC77376.1"/>
    <property type="molecule type" value="mRNA"/>
</dbReference>
<dbReference type="EMBL" id="AL158069">
    <property type="status" value="NOT_ANNOTATED_CDS"/>
    <property type="molecule type" value="Genomic_DNA"/>
</dbReference>
<dbReference type="EMBL" id="AL158141">
    <property type="status" value="NOT_ANNOTATED_CDS"/>
    <property type="molecule type" value="Genomic_DNA"/>
</dbReference>
<dbReference type="EMBL" id="FO393403">
    <property type="status" value="NOT_ANNOTATED_CDS"/>
    <property type="molecule type" value="Genomic_DNA"/>
</dbReference>
<dbReference type="EMBL" id="BC126143">
    <property type="protein sequence ID" value="AAI26144.1"/>
    <property type="molecule type" value="mRNA"/>
</dbReference>
<dbReference type="EMBL" id="BC144049">
    <property type="protein sequence ID" value="AAI44050.1"/>
    <property type="molecule type" value="mRNA"/>
</dbReference>
<dbReference type="EMBL" id="BC144051">
    <property type="protein sequence ID" value="AAI44052.1"/>
    <property type="molecule type" value="mRNA"/>
</dbReference>
<dbReference type="CCDS" id="CCDS14394.1">
    <molecule id="Q92838-1"/>
</dbReference>
<dbReference type="CCDS" id="CCDS35318.2">
    <molecule id="Q92838-2"/>
</dbReference>
<dbReference type="CCDS" id="CCDS35319.2">
    <molecule id="Q92838-9"/>
</dbReference>
<dbReference type="CCDS" id="CCDS43966.1">
    <molecule id="Q92838-3"/>
</dbReference>
<dbReference type="CCDS" id="CCDS55436.1">
    <molecule id="Q92838-7"/>
</dbReference>
<dbReference type="RefSeq" id="NP_001005609.1">
    <molecule id="Q92838-3"/>
    <property type="nucleotide sequence ID" value="NM_001005609.2"/>
</dbReference>
<dbReference type="RefSeq" id="NP_001005610.2">
    <molecule id="Q92838-2"/>
    <property type="nucleotide sequence ID" value="NM_001005610.4"/>
</dbReference>
<dbReference type="RefSeq" id="NP_001005612.2">
    <molecule id="Q92838-9"/>
    <property type="nucleotide sequence ID" value="NM_001005612.3"/>
</dbReference>
<dbReference type="RefSeq" id="NP_001005613.1">
    <molecule id="Q92838-7"/>
    <property type="nucleotide sequence ID" value="NM_001005613.4"/>
</dbReference>
<dbReference type="RefSeq" id="NP_001390.1">
    <molecule id="Q92838-1"/>
    <property type="nucleotide sequence ID" value="NM_001399.5"/>
</dbReference>
<dbReference type="PDB" id="1RJ7">
    <property type="method" value="X-ray"/>
    <property type="resolution" value="2.30 A"/>
    <property type="chains" value="A/B/D/E/F/G/H/I/J/K/L/M=233-391"/>
</dbReference>
<dbReference type="PDB" id="1RJ8">
    <property type="method" value="X-ray"/>
    <property type="resolution" value="2.23 A"/>
    <property type="chains" value="A/B/D/E/F/G=230-389"/>
</dbReference>
<dbReference type="PDB" id="7X9G">
    <property type="method" value="X-ray"/>
    <property type="resolution" value="2.80 A"/>
    <property type="chains" value="A/B=233-391"/>
</dbReference>
<dbReference type="PDBsum" id="1RJ7"/>
<dbReference type="PDBsum" id="1RJ8"/>
<dbReference type="PDBsum" id="7X9G"/>
<dbReference type="SMR" id="Q92838"/>
<dbReference type="BioGRID" id="108224">
    <property type="interactions" value="111"/>
</dbReference>
<dbReference type="FunCoup" id="Q92838">
    <property type="interactions" value="511"/>
</dbReference>
<dbReference type="IntAct" id="Q92838">
    <property type="interactions" value="89"/>
</dbReference>
<dbReference type="STRING" id="9606.ENSP00000363680"/>
<dbReference type="GlyCosmos" id="Q92838">
    <property type="glycosylation" value="2 sites, No reported glycans"/>
</dbReference>
<dbReference type="GlyGen" id="Q92838">
    <property type="glycosylation" value="4 sites"/>
</dbReference>
<dbReference type="iPTMnet" id="Q92838"/>
<dbReference type="PhosphoSitePlus" id="Q92838"/>
<dbReference type="SwissPalm" id="Q92838"/>
<dbReference type="BioMuta" id="EDA"/>
<dbReference type="DMDM" id="6166135"/>
<dbReference type="jPOST" id="Q92838"/>
<dbReference type="MassIVE" id="Q92838"/>
<dbReference type="PaxDb" id="9606-ENSP00000363680"/>
<dbReference type="PeptideAtlas" id="Q92838"/>
<dbReference type="ProteomicsDB" id="75522">
    <molecule id="Q92838-1"/>
</dbReference>
<dbReference type="ProteomicsDB" id="75524">
    <molecule id="Q92838-3"/>
</dbReference>
<dbReference type="ProteomicsDB" id="75529">
    <molecule id="Q92838-9"/>
</dbReference>
<dbReference type="ABCD" id="Q92838">
    <property type="antibodies" value="3 sequenced antibodies"/>
</dbReference>
<dbReference type="Antibodypedia" id="27342">
    <property type="antibodies" value="565 antibodies from 37 providers"/>
</dbReference>
<dbReference type="DNASU" id="1896"/>
<dbReference type="Ensembl" id="ENST00000338901.4">
    <molecule id="Q92838-5"/>
    <property type="protein sequence ID" value="ENSP00000340611.4"/>
    <property type="gene ID" value="ENSG00000158813.18"/>
</dbReference>
<dbReference type="Ensembl" id="ENST00000374552.9">
    <molecule id="Q92838-1"/>
    <property type="protein sequence ID" value="ENSP00000363680.4"/>
    <property type="gene ID" value="ENSG00000158813.18"/>
</dbReference>
<dbReference type="Ensembl" id="ENST00000374553.6">
    <molecule id="Q92838-3"/>
    <property type="protein sequence ID" value="ENSP00000363681.2"/>
    <property type="gene ID" value="ENSG00000158813.18"/>
</dbReference>
<dbReference type="Ensembl" id="ENST00000524573.5">
    <molecule id="Q92838-9"/>
    <property type="protein sequence ID" value="ENSP00000432585.1"/>
    <property type="gene ID" value="ENSG00000158813.18"/>
</dbReference>
<dbReference type="Ensembl" id="ENST00000525810.5">
    <molecule id="Q92838-2"/>
    <property type="protein sequence ID" value="ENSP00000434195.1"/>
    <property type="gene ID" value="ENSG00000158813.18"/>
</dbReference>
<dbReference type="Ensembl" id="ENST00000527388.5">
    <molecule id="Q92838-7"/>
    <property type="protein sequence ID" value="ENSP00000434861.1"/>
    <property type="gene ID" value="ENSG00000158813.18"/>
</dbReference>
<dbReference type="GeneID" id="1896"/>
<dbReference type="KEGG" id="hsa:1896"/>
<dbReference type="MANE-Select" id="ENST00000374552.9">
    <property type="protein sequence ID" value="ENSP00000363680.4"/>
    <property type="RefSeq nucleotide sequence ID" value="NM_001399.5"/>
    <property type="RefSeq protein sequence ID" value="NP_001390.1"/>
</dbReference>
<dbReference type="UCSC" id="uc004dxm.2">
    <molecule id="Q92838-1"/>
    <property type="organism name" value="human"/>
</dbReference>
<dbReference type="AGR" id="HGNC:3157"/>
<dbReference type="CTD" id="1896"/>
<dbReference type="DisGeNET" id="1896"/>
<dbReference type="GeneCards" id="EDA"/>
<dbReference type="GeneReviews" id="EDA"/>
<dbReference type="HGNC" id="HGNC:3157">
    <property type="gene designation" value="EDA"/>
</dbReference>
<dbReference type="HPA" id="ENSG00000158813">
    <property type="expression patterns" value="Low tissue specificity"/>
</dbReference>
<dbReference type="MalaCards" id="EDA"/>
<dbReference type="MIM" id="300451">
    <property type="type" value="gene"/>
</dbReference>
<dbReference type="MIM" id="305100">
    <property type="type" value="phenotype"/>
</dbReference>
<dbReference type="MIM" id="313500">
    <property type="type" value="phenotype"/>
</dbReference>
<dbReference type="neXtProt" id="NX_Q92838"/>
<dbReference type="OpenTargets" id="ENSG00000158813"/>
<dbReference type="Orphanet" id="99798">
    <property type="disease" value="Oligodontia"/>
</dbReference>
<dbReference type="Orphanet" id="181">
    <property type="disease" value="X-linked hypohidrotic ectodermal dysplasia"/>
</dbReference>
<dbReference type="PharmGKB" id="PA27601"/>
<dbReference type="VEuPathDB" id="HostDB:ENSG00000158813"/>
<dbReference type="eggNOG" id="ENOG502QUAV">
    <property type="taxonomic scope" value="Eukaryota"/>
</dbReference>
<dbReference type="GeneTree" id="ENSGT00730000111220"/>
<dbReference type="HOGENOM" id="CLU_1880065_0_0_1"/>
<dbReference type="InParanoid" id="Q92838"/>
<dbReference type="OMA" id="PRGAPCM"/>
<dbReference type="OrthoDB" id="6159739at2759"/>
<dbReference type="PAN-GO" id="Q92838">
    <property type="GO annotations" value="4 GO annotations based on evolutionary models"/>
</dbReference>
<dbReference type="PhylomeDB" id="Q92838"/>
<dbReference type="TreeFam" id="TF332099"/>
<dbReference type="PathwayCommons" id="Q92838"/>
<dbReference type="Reactome" id="R-HSA-5669034">
    <molecule id="Q92838-3"/>
    <property type="pathway name" value="TNFs bind their physiological receptors"/>
</dbReference>
<dbReference type="SignaLink" id="Q92838"/>
<dbReference type="SIGNOR" id="Q92838"/>
<dbReference type="BioGRID-ORCS" id="1896">
    <property type="hits" value="11 hits in 779 CRISPR screens"/>
</dbReference>
<dbReference type="ChiTaRS" id="EDA">
    <property type="organism name" value="human"/>
</dbReference>
<dbReference type="EvolutionaryTrace" id="Q92838"/>
<dbReference type="GeneWiki" id="EDA_(gene)"/>
<dbReference type="GenomeRNAi" id="1896"/>
<dbReference type="Pharos" id="Q92838">
    <property type="development level" value="Tbio"/>
</dbReference>
<dbReference type="PRO" id="PR:Q92838"/>
<dbReference type="Proteomes" id="UP000005640">
    <property type="component" value="Chromosome X"/>
</dbReference>
<dbReference type="RNAct" id="Q92838">
    <property type="molecule type" value="protein"/>
</dbReference>
<dbReference type="Bgee" id="ENSG00000158813">
    <property type="expression patterns" value="Expressed in male germ line stem cell (sensu Vertebrata) in testis and 129 other cell types or tissues"/>
</dbReference>
<dbReference type="ExpressionAtlas" id="Q92838">
    <property type="expression patterns" value="baseline and differential"/>
</dbReference>
<dbReference type="GO" id="GO:0045177">
    <property type="term" value="C:apical part of cell"/>
    <property type="evidence" value="ECO:0007669"/>
    <property type="project" value="Ensembl"/>
</dbReference>
<dbReference type="GO" id="GO:0005581">
    <property type="term" value="C:collagen trimer"/>
    <property type="evidence" value="ECO:0007669"/>
    <property type="project" value="UniProtKB-KW"/>
</dbReference>
<dbReference type="GO" id="GO:0005856">
    <property type="term" value="C:cytoskeleton"/>
    <property type="evidence" value="ECO:0000304"/>
    <property type="project" value="ProtInc"/>
</dbReference>
<dbReference type="GO" id="GO:0005789">
    <property type="term" value="C:endoplasmic reticulum membrane"/>
    <property type="evidence" value="ECO:0007669"/>
    <property type="project" value="Ensembl"/>
</dbReference>
<dbReference type="GO" id="GO:0005615">
    <property type="term" value="C:extracellular space"/>
    <property type="evidence" value="ECO:0000318"/>
    <property type="project" value="GO_Central"/>
</dbReference>
<dbReference type="GO" id="GO:0043231">
    <property type="term" value="C:intracellular membrane-bounded organelle"/>
    <property type="evidence" value="ECO:0000314"/>
    <property type="project" value="HPA"/>
</dbReference>
<dbReference type="GO" id="GO:0005811">
    <property type="term" value="C:lipid droplet"/>
    <property type="evidence" value="ECO:0000314"/>
    <property type="project" value="HPA"/>
</dbReference>
<dbReference type="GO" id="GO:0016020">
    <property type="term" value="C:membrane"/>
    <property type="evidence" value="ECO:0000304"/>
    <property type="project" value="ProtInc"/>
</dbReference>
<dbReference type="GO" id="GO:0005886">
    <property type="term" value="C:plasma membrane"/>
    <property type="evidence" value="ECO:0000304"/>
    <property type="project" value="Reactome"/>
</dbReference>
<dbReference type="GO" id="GO:0005125">
    <property type="term" value="F:cytokine activity"/>
    <property type="evidence" value="ECO:0000314"/>
    <property type="project" value="ARUK-UCL"/>
</dbReference>
<dbReference type="GO" id="GO:0038177">
    <property type="term" value="F:death receptor agonist activity"/>
    <property type="evidence" value="ECO:0000315"/>
    <property type="project" value="UniProtKB"/>
</dbReference>
<dbReference type="GO" id="GO:0005123">
    <property type="term" value="F:death receptor binding"/>
    <property type="evidence" value="ECO:0000314"/>
    <property type="project" value="UniProtKB"/>
</dbReference>
<dbReference type="GO" id="GO:0048018">
    <property type="term" value="F:receptor ligand activity"/>
    <property type="evidence" value="ECO:0000318"/>
    <property type="project" value="GO_Central"/>
</dbReference>
<dbReference type="GO" id="GO:0005102">
    <property type="term" value="F:signaling receptor binding"/>
    <property type="evidence" value="ECO:0000314"/>
    <property type="project" value="HGNC-UCL"/>
</dbReference>
<dbReference type="GO" id="GO:0005164">
    <property type="term" value="F:tumor necrosis factor receptor binding"/>
    <property type="evidence" value="ECO:0007669"/>
    <property type="project" value="InterPro"/>
</dbReference>
<dbReference type="GO" id="GO:0048513">
    <property type="term" value="P:animal organ development"/>
    <property type="evidence" value="ECO:0000318"/>
    <property type="project" value="GO_Central"/>
</dbReference>
<dbReference type="GO" id="GO:0060070">
    <property type="term" value="P:canonical Wnt signaling pathway"/>
    <property type="evidence" value="ECO:0007669"/>
    <property type="project" value="Ensembl"/>
</dbReference>
<dbReference type="GO" id="GO:0030154">
    <property type="term" value="P:cell differentiation"/>
    <property type="evidence" value="ECO:0007669"/>
    <property type="project" value="UniProtKB-KW"/>
</dbReference>
<dbReference type="GO" id="GO:0007160">
    <property type="term" value="P:cell-matrix adhesion"/>
    <property type="evidence" value="ECO:0007669"/>
    <property type="project" value="Ensembl"/>
</dbReference>
<dbReference type="GO" id="GO:0019221">
    <property type="term" value="P:cytokine-mediated signaling pathway"/>
    <property type="evidence" value="ECO:0000314"/>
    <property type="project" value="ARUK-UCL"/>
</dbReference>
<dbReference type="GO" id="GO:0010467">
    <property type="term" value="P:gene expression"/>
    <property type="evidence" value="ECO:0007669"/>
    <property type="project" value="Ensembl"/>
</dbReference>
<dbReference type="GO" id="GO:0060789">
    <property type="term" value="P:hair follicle placode formation"/>
    <property type="evidence" value="ECO:0007669"/>
    <property type="project" value="Ensembl"/>
</dbReference>
<dbReference type="GO" id="GO:0006955">
    <property type="term" value="P:immune response"/>
    <property type="evidence" value="ECO:0007669"/>
    <property type="project" value="InterPro"/>
</dbReference>
<dbReference type="GO" id="GO:0042475">
    <property type="term" value="P:odontogenesis of dentin-containing tooth"/>
    <property type="evidence" value="ECO:0000315"/>
    <property type="project" value="UniProtKB"/>
</dbReference>
<dbReference type="GO" id="GO:0043473">
    <property type="term" value="P:pigmentation"/>
    <property type="evidence" value="ECO:0007669"/>
    <property type="project" value="Ensembl"/>
</dbReference>
<dbReference type="GO" id="GO:0043123">
    <property type="term" value="P:positive regulation of canonical NF-kappaB signal transduction"/>
    <property type="evidence" value="ECO:0000314"/>
    <property type="project" value="HGNC-UCL"/>
</dbReference>
<dbReference type="GO" id="GO:0090263">
    <property type="term" value="P:positive regulation of canonical Wnt signaling pathway"/>
    <property type="evidence" value="ECO:0007669"/>
    <property type="project" value="Ensembl"/>
</dbReference>
<dbReference type="GO" id="GO:0010628">
    <property type="term" value="P:positive regulation of gene expression"/>
    <property type="evidence" value="ECO:0007669"/>
    <property type="project" value="Ensembl"/>
</dbReference>
<dbReference type="GO" id="GO:1901224">
    <property type="term" value="P:positive regulation of non-canonical NF-kappaB signal transduction"/>
    <property type="evidence" value="ECO:0007669"/>
    <property type="project" value="Ensembl"/>
</dbReference>
<dbReference type="GO" id="GO:1901222">
    <property type="term" value="P:regulation of non-canonical NF-kappaB signal transduction"/>
    <property type="evidence" value="ECO:0000315"/>
    <property type="project" value="UniProtKB"/>
</dbReference>
<dbReference type="GO" id="GO:0060662">
    <property type="term" value="P:salivary gland cavitation"/>
    <property type="evidence" value="ECO:0007669"/>
    <property type="project" value="Ensembl"/>
</dbReference>
<dbReference type="GO" id="GO:0061153">
    <property type="term" value="P:trachea gland development"/>
    <property type="evidence" value="ECO:0007669"/>
    <property type="project" value="Ensembl"/>
</dbReference>
<dbReference type="FunFam" id="2.60.120.40:FF:000004">
    <property type="entry name" value="Ectodysplasin-A isoform A"/>
    <property type="match status" value="1"/>
</dbReference>
<dbReference type="Gene3D" id="2.60.120.40">
    <property type="match status" value="1"/>
</dbReference>
<dbReference type="InterPro" id="IPR006052">
    <property type="entry name" value="TNF_dom"/>
</dbReference>
<dbReference type="InterPro" id="IPR051748">
    <property type="entry name" value="TNF_Ligand_Superfamily"/>
</dbReference>
<dbReference type="InterPro" id="IPR008983">
    <property type="entry name" value="Tumour_necrosis_fac-like_dom"/>
</dbReference>
<dbReference type="PANTHER" id="PTHR15151:SF13">
    <property type="entry name" value="ECTODYSPLASIN-A"/>
    <property type="match status" value="1"/>
</dbReference>
<dbReference type="PANTHER" id="PTHR15151">
    <property type="entry name" value="PROTEIN EIGER"/>
    <property type="match status" value="1"/>
</dbReference>
<dbReference type="Pfam" id="PF00229">
    <property type="entry name" value="TNF"/>
    <property type="match status" value="1"/>
</dbReference>
<dbReference type="SUPFAM" id="SSF49842">
    <property type="entry name" value="TNF-like"/>
    <property type="match status" value="1"/>
</dbReference>
<dbReference type="PROSITE" id="PS50049">
    <property type="entry name" value="THD_2"/>
    <property type="match status" value="1"/>
</dbReference>
<proteinExistence type="evidence at protein level"/>
<gene>
    <name type="primary">EDA</name>
    <name type="synonym">ED1</name>
    <name type="synonym">EDA2</name>
</gene>
<name>EDA_HUMAN</name>
<protein>
    <recommendedName>
        <fullName>Ectodysplasin-A</fullName>
    </recommendedName>
    <alternativeName>
        <fullName>Ectodermal dysplasia protein</fullName>
        <shortName>EDA protein</shortName>
    </alternativeName>
    <component>
        <recommendedName>
            <fullName>Ectodysplasin-A, membrane form</fullName>
        </recommendedName>
    </component>
    <component>
        <recommendedName>
            <fullName>Ectodysplasin-A, secreted form</fullName>
        </recommendedName>
    </component>
</protein>
<organism>
    <name type="scientific">Homo sapiens</name>
    <name type="common">Human</name>
    <dbReference type="NCBI Taxonomy" id="9606"/>
    <lineage>
        <taxon>Eukaryota</taxon>
        <taxon>Metazoa</taxon>
        <taxon>Chordata</taxon>
        <taxon>Craniata</taxon>
        <taxon>Vertebrata</taxon>
        <taxon>Euteleostomi</taxon>
        <taxon>Mammalia</taxon>
        <taxon>Eutheria</taxon>
        <taxon>Euarchontoglires</taxon>
        <taxon>Primates</taxon>
        <taxon>Haplorrhini</taxon>
        <taxon>Catarrhini</taxon>
        <taxon>Hominidae</taxon>
        <taxon>Homo</taxon>
    </lineage>
</organism>
<sequence length="391" mass="41294">MGYPEVERRELLPAAAPRERGSQGCGCGGAPARAGEGNSCLLFLGFFGLSLALHLLTLCCYLELRSELRRERGAESRLGGSGTPGTSGTLSSLGGLDPDSPITSHLGQPSPKQQPLEPGEAALHSDSQDGHQMALLNFFFPDEKPYSEEESRRVRRNKRSKSNEGADGPVKNKKKGKKAGPPGPNGPPGPPGPPGPQGPPGIPGIPGIPGTTVMGPPGPPGPPGPQGPPGLQGPSGAADKAGTRENQPAVVHLQGQGSAIQVKNDLSGGVLNDWSRITMNPKVFKLHPRSGELEVLVDGTYFIYSQVEVYYINFTDFASYEVVVDEKPFLQCTRSIETGKTNYNTCYTAGVCLLKARQKIAVKMVHADISINMSKHTTFFGAIRLGEAPAS</sequence>